<keyword id="KW-0002">3D-structure</keyword>
<keyword id="KW-0068">Autocatalytic cleavage</keyword>
<keyword id="KW-0106">Calcium</keyword>
<keyword id="KW-1003">Cell membrane</keyword>
<keyword id="KW-0217">Developmental protein</keyword>
<keyword id="KW-0903">Direct protein sequencing</keyword>
<keyword id="KW-0225">Disease variant</keyword>
<keyword id="KW-0256">Endoplasmic reticulum</keyword>
<keyword id="KW-0325">Glycoprotein</keyword>
<keyword id="KW-0333">Golgi apparatus</keyword>
<keyword id="KW-0370">Holoprosencephaly</keyword>
<keyword id="KW-0378">Hydrolase</keyword>
<keyword id="KW-0449">Lipoprotein</keyword>
<keyword id="KW-0472">Membrane</keyword>
<keyword id="KW-0479">Metal-binding</keyword>
<keyword id="KW-1013">Microphthalmia</keyword>
<keyword id="KW-0564">Palmitate</keyword>
<keyword id="KW-0645">Protease</keyword>
<keyword id="KW-1267">Proteomics identification</keyword>
<keyword id="KW-1185">Reference proteome</keyword>
<keyword id="KW-0964">Secreted</keyword>
<keyword id="KW-0732">Signal</keyword>
<keyword id="KW-0808">Transferase</keyword>
<keyword id="KW-0862">Zinc</keyword>
<organism>
    <name type="scientific">Homo sapiens</name>
    <name type="common">Human</name>
    <dbReference type="NCBI Taxonomy" id="9606"/>
    <lineage>
        <taxon>Eukaryota</taxon>
        <taxon>Metazoa</taxon>
        <taxon>Chordata</taxon>
        <taxon>Craniata</taxon>
        <taxon>Vertebrata</taxon>
        <taxon>Euteleostomi</taxon>
        <taxon>Mammalia</taxon>
        <taxon>Eutheria</taxon>
        <taxon>Euarchontoglires</taxon>
        <taxon>Primates</taxon>
        <taxon>Haplorrhini</taxon>
        <taxon>Catarrhini</taxon>
        <taxon>Hominidae</taxon>
        <taxon>Homo</taxon>
    </lineage>
</organism>
<gene>
    <name evidence="47" type="primary">SHH</name>
</gene>
<sequence length="462" mass="49607">MLLLARCLLLVLVSSLLVCSGLACGPGRGFGKRRHPKKLTPLAYKQFIPNVAEKTLGASGRYEGKISRNSERFKELTPNYNPDIIFKDEENTGADRLMTQRCKDKLNALAISVMNQWPGVKLRVTEGWDEDGHHSEESLHYEGRAVDITTSDRDRSKYGMLARLAVEAGFDWVYYESKAHIHCSVKAENSVAAKSGGCFPGSATVHLEQGGTKLVKDLSPGDRVLAADDQGRLLYSDFLTFLDRDDGAKKVFYVIETREPRERLLLTAAHLLFVAPHNDSATGEPEASSGSGPPSGGALGPRALFASRVRPGQRVYVVAERDGDRRLLPAAVHSVTLSEEAAGAYAPLTAQGTILINRVLASCYAVIEEHSWAHRAFAPFRLAHALLAALAPARTDRGGDSGGGDRGGGGGRVALTAPGAADAPGAGATAGIHWYSQLLYQIGTWLLDSEALHPLGMAVKSS</sequence>
<reference key="1">
    <citation type="journal article" date="1995" name="Genomics">
        <title>Cloning, expression, and chromosomal location of SHH and IHH: two human homologues of the Drosophila segment polarity gene hedgehog.</title>
        <authorList>
            <person name="Marigo V."/>
            <person name="Roberts D.J."/>
            <person name="Lee S.M.K."/>
            <person name="Tsukurov O."/>
            <person name="Levi T."/>
            <person name="Gastier J.M."/>
            <person name="Epstein D.J."/>
            <person name="Gilbert D.J."/>
            <person name="Copeland N.G."/>
            <person name="Seidman C.E."/>
            <person name="Jenkins N.A."/>
            <person name="Seidman J.G."/>
            <person name="McMahon A.P."/>
            <person name="Tabin C."/>
        </authorList>
    </citation>
    <scope>NUCLEOTIDE SEQUENCE [MRNA]</scope>
    <source>
        <tissue>Fetal lung</tissue>
    </source>
</reference>
<reference key="2">
    <citation type="journal article" date="2000" name="J. Biochem. Mol. Biol. Biophys.">
        <title>Expression of Sonic hedgehog and its receptor Patched/Smoothened in human cancer cell lines and embryonic organs.</title>
        <authorList>
            <person name="Tate G."/>
            <person name="Kishimoto K."/>
            <person name="Mitsuya T."/>
        </authorList>
    </citation>
    <scope>NUCLEOTIDE SEQUENCE [GENOMIC DNA]</scope>
</reference>
<reference key="3">
    <citation type="submission" date="2003-09" db="EMBL/GenBank/DDBJ databases">
        <authorList>
            <consortium name="NIEHS SNPs program"/>
        </authorList>
    </citation>
    <scope>NUCLEOTIDE SEQUENCE [GENOMIC DNA]</scope>
</reference>
<reference key="4">
    <citation type="journal article" date="2003" name="Nature">
        <title>The DNA sequence of human chromosome 7.</title>
        <authorList>
            <person name="Hillier L.W."/>
            <person name="Fulton R.S."/>
            <person name="Fulton L.A."/>
            <person name="Graves T.A."/>
            <person name="Pepin K.H."/>
            <person name="Wagner-McPherson C."/>
            <person name="Layman D."/>
            <person name="Maas J."/>
            <person name="Jaeger S."/>
            <person name="Walker R."/>
            <person name="Wylie K."/>
            <person name="Sekhon M."/>
            <person name="Becker M.C."/>
            <person name="O'Laughlin M.D."/>
            <person name="Schaller M.E."/>
            <person name="Fewell G.A."/>
            <person name="Delehaunty K.D."/>
            <person name="Miner T.L."/>
            <person name="Nash W.E."/>
            <person name="Cordes M."/>
            <person name="Du H."/>
            <person name="Sun H."/>
            <person name="Edwards J."/>
            <person name="Bradshaw-Cordum H."/>
            <person name="Ali J."/>
            <person name="Andrews S."/>
            <person name="Isak A."/>
            <person name="Vanbrunt A."/>
            <person name="Nguyen C."/>
            <person name="Du F."/>
            <person name="Lamar B."/>
            <person name="Courtney L."/>
            <person name="Kalicki J."/>
            <person name="Ozersky P."/>
            <person name="Bielicki L."/>
            <person name="Scott K."/>
            <person name="Holmes A."/>
            <person name="Harkins R."/>
            <person name="Harris A."/>
            <person name="Strong C.M."/>
            <person name="Hou S."/>
            <person name="Tomlinson C."/>
            <person name="Dauphin-Kohlberg S."/>
            <person name="Kozlowicz-Reilly A."/>
            <person name="Leonard S."/>
            <person name="Rohlfing T."/>
            <person name="Rock S.M."/>
            <person name="Tin-Wollam A.-M."/>
            <person name="Abbott A."/>
            <person name="Minx P."/>
            <person name="Maupin R."/>
            <person name="Strowmatt C."/>
            <person name="Latreille P."/>
            <person name="Miller N."/>
            <person name="Johnson D."/>
            <person name="Murray J."/>
            <person name="Woessner J.P."/>
            <person name="Wendl M.C."/>
            <person name="Yang S.-P."/>
            <person name="Schultz B.R."/>
            <person name="Wallis J.W."/>
            <person name="Spieth J."/>
            <person name="Bieri T.A."/>
            <person name="Nelson J.O."/>
            <person name="Berkowicz N."/>
            <person name="Wohldmann P.E."/>
            <person name="Cook L.L."/>
            <person name="Hickenbotham M.T."/>
            <person name="Eldred J."/>
            <person name="Williams D."/>
            <person name="Bedell J.A."/>
            <person name="Mardis E.R."/>
            <person name="Clifton S.W."/>
            <person name="Chissoe S.L."/>
            <person name="Marra M.A."/>
            <person name="Raymond C."/>
            <person name="Haugen E."/>
            <person name="Gillett W."/>
            <person name="Zhou Y."/>
            <person name="James R."/>
            <person name="Phelps K."/>
            <person name="Iadanoto S."/>
            <person name="Bubb K."/>
            <person name="Simms E."/>
            <person name="Levy R."/>
            <person name="Clendenning J."/>
            <person name="Kaul R."/>
            <person name="Kent W.J."/>
            <person name="Furey T.S."/>
            <person name="Baertsch R.A."/>
            <person name="Brent M.R."/>
            <person name="Keibler E."/>
            <person name="Flicek P."/>
            <person name="Bork P."/>
            <person name="Suyama M."/>
            <person name="Bailey J.A."/>
            <person name="Portnoy M.E."/>
            <person name="Torrents D."/>
            <person name="Chinwalla A.T."/>
            <person name="Gish W.R."/>
            <person name="Eddy S.R."/>
            <person name="McPherson J.D."/>
            <person name="Olson M.V."/>
            <person name="Eichler E.E."/>
            <person name="Green E.D."/>
            <person name="Waterston R.H."/>
            <person name="Wilson R.K."/>
        </authorList>
    </citation>
    <scope>NUCLEOTIDE SEQUENCE [LARGE SCALE GENOMIC DNA]</scope>
</reference>
<reference key="5">
    <citation type="journal article" date="2003" name="Science">
        <title>Human chromosome 7: DNA sequence and biology.</title>
        <authorList>
            <person name="Scherer S.W."/>
            <person name="Cheung J."/>
            <person name="MacDonald J.R."/>
            <person name="Osborne L.R."/>
            <person name="Nakabayashi K."/>
            <person name="Herbrick J.-A."/>
            <person name="Carson A.R."/>
            <person name="Parker-Katiraee L."/>
            <person name="Skaug J."/>
            <person name="Khaja R."/>
            <person name="Zhang J."/>
            <person name="Hudek A.K."/>
            <person name="Li M."/>
            <person name="Haddad M."/>
            <person name="Duggan G.E."/>
            <person name="Fernandez B.A."/>
            <person name="Kanematsu E."/>
            <person name="Gentles S."/>
            <person name="Christopoulos C.C."/>
            <person name="Choufani S."/>
            <person name="Kwasnicka D."/>
            <person name="Zheng X.H."/>
            <person name="Lai Z."/>
            <person name="Nusskern D.R."/>
            <person name="Zhang Q."/>
            <person name="Gu Z."/>
            <person name="Lu F."/>
            <person name="Zeesman S."/>
            <person name="Nowaczyk M.J."/>
            <person name="Teshima I."/>
            <person name="Chitayat D."/>
            <person name="Shuman C."/>
            <person name="Weksberg R."/>
            <person name="Zackai E.H."/>
            <person name="Grebe T.A."/>
            <person name="Cox S.R."/>
            <person name="Kirkpatrick S.J."/>
            <person name="Rahman N."/>
            <person name="Friedman J.M."/>
            <person name="Heng H.H.Q."/>
            <person name="Pelicci P.G."/>
            <person name="Lo-Coco F."/>
            <person name="Belloni E."/>
            <person name="Shaffer L.G."/>
            <person name="Pober B."/>
            <person name="Morton C.C."/>
            <person name="Gusella J.F."/>
            <person name="Bruns G.A.P."/>
            <person name="Korf B.R."/>
            <person name="Quade B.J."/>
            <person name="Ligon A.H."/>
            <person name="Ferguson H."/>
            <person name="Higgins A.W."/>
            <person name="Leach N.T."/>
            <person name="Herrick S.R."/>
            <person name="Lemyre E."/>
            <person name="Farra C.G."/>
            <person name="Kim H.-G."/>
            <person name="Summers A.M."/>
            <person name="Gripp K.W."/>
            <person name="Roberts W."/>
            <person name="Szatmari P."/>
            <person name="Winsor E.J.T."/>
            <person name="Grzeschik K.-H."/>
            <person name="Teebi A."/>
            <person name="Minassian B.A."/>
            <person name="Kere J."/>
            <person name="Armengol L."/>
            <person name="Pujana M.A."/>
            <person name="Estivill X."/>
            <person name="Wilson M.D."/>
            <person name="Koop B.F."/>
            <person name="Tosi S."/>
            <person name="Moore G.E."/>
            <person name="Boright A.P."/>
            <person name="Zlotorynski E."/>
            <person name="Kerem B."/>
            <person name="Kroisel P.M."/>
            <person name="Petek E."/>
            <person name="Oscier D.G."/>
            <person name="Mould S.J."/>
            <person name="Doehner H."/>
            <person name="Doehner K."/>
            <person name="Rommens J.M."/>
            <person name="Vincent J.B."/>
            <person name="Venter J.C."/>
            <person name="Li P.W."/>
            <person name="Mural R.J."/>
            <person name="Adams M.D."/>
            <person name="Tsui L.-C."/>
        </authorList>
    </citation>
    <scope>NUCLEOTIDE SEQUENCE [LARGE SCALE GENOMIC DNA]</scope>
</reference>
<reference key="6">
    <citation type="journal article" date="1998" name="J. Biol. Chem.">
        <title>Identification of a palmitic acid-modified form of human Sonic hedgehog.</title>
        <authorList>
            <person name="Pepinsky R.B."/>
            <person name="Zeng C."/>
            <person name="Wen D."/>
            <person name="Rayhorn P."/>
            <person name="Baker D.P."/>
            <person name="Williams K.P."/>
            <person name="Bixler S.A."/>
            <person name="Ambrose C.M."/>
            <person name="Garber E.A."/>
            <person name="Miatkowski K."/>
            <person name="Taylor F.R."/>
            <person name="Wang E.A."/>
            <person name="Galdes A."/>
        </authorList>
    </citation>
    <scope>PROTEIN SEQUENCE OF 24-32</scope>
    <scope>PALMITOYLATION AT CYS-24</scope>
    <scope>CHOLESTERYLATION</scope>
    <scope>MUTAGENESIS OF CYS-24</scope>
    <scope>MASS SPECTROMETRY</scope>
</reference>
<reference key="7">
    <citation type="journal article" date="1994" name="Development">
        <title>Products, genetic linkage and limb patterning activity of a murine hedgehog gene.</title>
        <authorList>
            <person name="Chang D.T."/>
            <person name="Lopez A."/>
            <person name="von Kessler D.P."/>
            <person name="Chiang C."/>
            <person name="Simandl B.K."/>
            <person name="Zhao R."/>
            <person name="Seldin M.F."/>
            <person name="Fallon J.F."/>
            <person name="Beachy P.A."/>
        </authorList>
    </citation>
    <scope>NUCLEOTIDE SEQUENCE [MRNA] OF 119-167</scope>
</reference>
<reference key="8">
    <citation type="journal article" date="2003" name="Hum. Mol. Genet.">
        <title>A long-range Shh enhancer regulates expression in the developing limb and fin and is associated with preaxial polydactyly.</title>
        <authorList>
            <person name="Lettice L.A."/>
            <person name="Heaney S.J.H."/>
            <person name="Purdie L.A."/>
            <person name="Li L."/>
            <person name="de Beer P."/>
            <person name="Oostra B.A."/>
            <person name="Goode D."/>
            <person name="Elgar G."/>
            <person name="Hill R.E."/>
            <person name="de Graaff E."/>
        </authorList>
    </citation>
    <scope>INVOLVEMENT IN TPTPS</scope>
    <scope>INVOLVEMENT IN PPD2</scope>
</reference>
<reference key="9">
    <citation type="journal article" date="2005" name="J. Proteome Res.">
        <title>Human plasma N-glycoproteome analysis by immunoaffinity subtraction, hydrazide chemistry, and mass spectrometry.</title>
        <authorList>
            <person name="Liu T."/>
            <person name="Qian W.-J."/>
            <person name="Gritsenko M.A."/>
            <person name="Camp D.G. II"/>
            <person name="Monroe M.E."/>
            <person name="Moore R.J."/>
            <person name="Smith R.D."/>
        </authorList>
    </citation>
    <scope>GLYCOSYLATION [LARGE SCALE ANALYSIS] AT ASN-278</scope>
    <source>
        <tissue>Plasma</tissue>
    </source>
</reference>
<reference key="10">
    <citation type="journal article" date="2008" name="J. Biol. Chem.">
        <title>Hhat is a palmitoylacyltransferase with specificity for N-palmitoylation of Sonic Hedgehog.</title>
        <authorList>
            <person name="Buglino J.A."/>
            <person name="Resh M.D."/>
        </authorList>
    </citation>
    <scope>PALMITOYLATION AT CYS-24</scope>
    <scope>MUTAGENESIS OF CYS-24</scope>
    <scope>SUBCELLULAR LOCATION</scope>
</reference>
<reference key="11">
    <citation type="journal article" date="2008" name="J. Med. Genet.">
        <title>Triphalangeal thumb-polysyndactyly syndrome and syndactyly type IV are caused by genomic duplications involving the long range, limb-specific SHH enhancer.</title>
        <authorList>
            <person name="Sun M."/>
            <person name="Ma F."/>
            <person name="Zeng X."/>
            <person name="Liu Q."/>
            <person name="Zhao X.-L."/>
            <person name="Wu F.-X."/>
            <person name="Wu G.-P."/>
            <person name="Zhang Z.-F."/>
            <person name="Gu B."/>
            <person name="Zhao Y.-F."/>
            <person name="Tian S.-H."/>
            <person name="Lin B."/>
            <person name="Kong X.-Y."/>
            <person name="Zhang X.-L."/>
            <person name="Yang W."/>
            <person name="Lo W.H.-Y."/>
            <person name="Zhang X."/>
        </authorList>
    </citation>
    <scope>INVOLVEMENT IN TPTPS</scope>
</reference>
<reference key="12">
    <citation type="journal article" date="2010" name="Hum. Mutat.">
        <title>A specific mutation in the distant sonic hedgehog (SHH) cis-regulator (ZRS) causes Werner mesomelic syndrome (WMS) while complete ZRS duplications underlie Haas type polysyndactyly and preaxial polydactyly (PPD) with or without triphalangeal thumb.</title>
        <authorList>
            <person name="Wieczorek D."/>
            <person name="Pawlik B."/>
            <person name="Li Y."/>
            <person name="Akarsu N.A."/>
            <person name="Caliebe A."/>
            <person name="May K.J."/>
            <person name="Schweiger B."/>
            <person name="Vargas F.R."/>
            <person name="Balci S."/>
            <person name="Gillessen-Kaesbach G."/>
            <person name="Wollnik B."/>
        </authorList>
    </citation>
    <scope>INVOLVEMENT IN THYP</scope>
</reference>
<reference key="13">
    <citation type="journal article" date="2012" name="Cell Rep.">
        <title>Dispatched and scube mediate the efficient secretion of the cholesterol-modified hedgehog ligand.</title>
        <authorList>
            <person name="Tukachinsky H."/>
            <person name="Kuzmickas R.P."/>
            <person name="Jao C.Y."/>
            <person name="Liu J."/>
            <person name="Salic A."/>
        </authorList>
    </citation>
    <scope>INTERACTION WITH DISP1 AND SCUBE2</scope>
    <scope>SUBUNIT</scope>
    <scope>CAUTION</scope>
</reference>
<reference key="14">
    <citation type="journal article" date="2019" name="Cell Rep.">
        <title>Hedgehog Acyltransferase Promotes Uptake of Palmitoyl-CoA across the Endoplasmic Reticulum Membrane.</title>
        <authorList>
            <person name="Asciolla J.J."/>
            <person name="Resh M.D."/>
        </authorList>
    </citation>
    <scope>PALMITOYLATION AT CYS-24</scope>
    <scope>MUTAGENESIS OF CYS-24</scope>
</reference>
<reference key="15">
    <citation type="journal article" date="2012" name="Genes Dev.">
        <title>Scube/You activity mediates release of dually lipid-modified Hedgehog signal in soluble form.</title>
        <authorList>
            <person name="Creanga A."/>
            <person name="Glenn T.D."/>
            <person name="Mann R.K."/>
            <person name="Saunders A.M."/>
            <person name="Talbot W.S."/>
            <person name="Beachy P.A."/>
        </authorList>
    </citation>
    <scope>INTERACTION WITH SCUBE2</scope>
    <scope>SUBUNIT</scope>
    <scope>CAUTION</scope>
</reference>
<reference key="16">
    <citation type="journal article" date="2012" name="J. Biol. Chem.">
        <title>An emerging role of Sonic hedgehog shedding as a modulator of heparan sulfate interactions.</title>
        <authorList>
            <person name="Ohlig S."/>
            <person name="Pickhinke U."/>
            <person name="Sirko S."/>
            <person name="Bandari S."/>
            <person name="Hoffmann D."/>
            <person name="Dreier R."/>
            <person name="Farshi P."/>
            <person name="Goetz M."/>
            <person name="Grobe K."/>
        </authorList>
    </citation>
    <scope>PTM</scope>
    <scope>DOMAIN</scope>
</reference>
<reference key="17">
    <citation type="journal article" date="2012" name="Genes Dev.">
        <title>Zebrafish genetics gets the Scube on Hedgehog secretion.</title>
        <authorList>
            <person name="Ingham P.W."/>
        </authorList>
    </citation>
    <scope>REVIEW</scope>
</reference>
<reference key="18">
    <citation type="journal article" date="2014" name="J. Cell Sci.">
        <title>Scube2 enhances proteolytic Shh processing from the surface of Shh-producing cells.</title>
        <authorList>
            <person name="Jakobs P."/>
            <person name="Exner S."/>
            <person name="Schuermann S."/>
            <person name="Pickhinke U."/>
            <person name="Bandari S."/>
            <person name="Ortmann C."/>
            <person name="Kupich S."/>
            <person name="Schulz P."/>
            <person name="Hansen U."/>
            <person name="Seidler D.G."/>
            <person name="Grobe K."/>
        </authorList>
    </citation>
    <scope>PTM</scope>
    <scope>INTERACTION WITH SCUBE2</scope>
    <scope>SUBUNIT</scope>
    <scope>SUBCELLULAR LOCATION</scope>
    <scope>FUNCTION</scope>
    <scope>CAUTION</scope>
</reference>
<reference key="19">
    <citation type="journal article" date="2014" name="Mech. Dev.">
        <title>A new role for Hedgehogs in juxtacrine signaling.</title>
        <authorList>
            <person name="Pettigrew C.A."/>
            <person name="Asp E."/>
            <person name="Emerson C.P. Jr."/>
        </authorList>
    </citation>
    <scope>SUBCELLULAR LOCATION</scope>
</reference>
<reference key="20">
    <citation type="journal article" date="2014" name="Clin. Genet.">
        <title>Microduplications encompassing the Sonic hedgehog limb enhancer ZRS are associated with Haas-type polysyndactyly and Laurin-Sandrow syndrome.</title>
        <authorList>
            <person name="Lohan S."/>
            <person name="Spielmann M."/>
            <person name="Doelken S.C."/>
            <person name="Floettmann R."/>
            <person name="Muhammad F."/>
            <person name="Baig S.M."/>
            <person name="Wajid M."/>
            <person name="Huelsemann W."/>
            <person name="Habenicht R."/>
            <person name="Kjaer K.W."/>
            <person name="Patil S.J."/>
            <person name="Girisha K.M."/>
            <person name="Abarca-Barriga H.H."/>
            <person name="Mundlos S."/>
            <person name="Klopocki E."/>
        </authorList>
    </citation>
    <scope>INVOLVEMENT IN LSS</scope>
</reference>
<reference key="21">
    <citation type="journal article" date="2014" name="J. Hum. Genet.">
        <title>ZRS 406A&gt;G mutation in patients with tibial hypoplasia, polydactyly and triphalangeal first fingers.</title>
        <authorList>
            <person name="Norbnop P."/>
            <person name="Srichomthong C."/>
            <person name="Suphapeetiporn K."/>
            <person name="Shotelersuk V."/>
        </authorList>
    </citation>
    <scope>INVOLVEMENT IN THYP</scope>
</reference>
<reference key="22">
    <citation type="journal article" date="2015" name="Dev. Neurobiol.">
        <title>Primary cilium and sonic hedgehog signaling during neural tube patterning: role of GPCRs and second messengers.</title>
        <authorList>
            <person name="Pal K."/>
            <person name="Mukhopadhyay S."/>
        </authorList>
    </citation>
    <scope>REVIEW</scope>
    <scope>FUNCTION</scope>
</reference>
<reference key="23">
    <citation type="journal article" date="2016" name="Dev. Biol.">
        <title>Hedgehog receptor function during craniofacial development.</title>
        <authorList>
            <person name="Xavier G.M."/>
            <person name="Seppala M."/>
            <person name="Barrell W."/>
            <person name="Birjandi A.A."/>
            <person name="Geoghegan F."/>
            <person name="Cobourne M.T."/>
        </authorList>
    </citation>
    <scope>REVIEW</scope>
    <scope>CAUTION</scope>
    <scope>SUBCELLULAR LOCATION</scope>
    <scope>PTM</scope>
</reference>
<reference key="24">
    <citation type="journal article" date="2000" name="J. Biol. Chem.">
        <title>Mapping sonic hedgehog-receptor interactions by steric interference.</title>
        <authorList>
            <person name="Pepinsky R.B."/>
            <person name="Rayhorn P."/>
            <person name="Day E.S."/>
            <person name="Dergay A."/>
            <person name="Williams K.P."/>
            <person name="Galdes A."/>
            <person name="Taylor F.R."/>
            <person name="Boriack-Sjodin P.A."/>
            <person name="Garber E.A."/>
        </authorList>
    </citation>
    <scope>X-RAY CRYSTALLOGRAPHY (1.85 ANGSTROMS) OF 25-197 IN COMPLEX WITH ZINC IONS</scope>
    <scope>FUNCTION</scope>
    <scope>DOMAIN</scope>
    <scope>SUBUNIT</scope>
</reference>
<reference key="25">
    <citation type="journal article" date="2009" name="Nat. Struct. Mol. Biol.">
        <title>The structure of SHH in complex with HHIP reveals a recognition role for the Shh pseudo active site in signaling.</title>
        <authorList>
            <person name="Bosanac I."/>
            <person name="Maun H.R."/>
            <person name="Scales S.J."/>
            <person name="Wen X."/>
            <person name="Lingel A."/>
            <person name="Bazan J.F."/>
            <person name="de Sauvage F.J."/>
            <person name="Hymowitz S.G."/>
            <person name="Lazarus R.A."/>
        </authorList>
    </citation>
    <scope>X-RAY CRYSTALLOGRAPHY (3.01 ANGSTROMS) OF 29-197 IN COMPLEX WITH HHIP; ZINC AND CALCIUM IONS</scope>
    <scope>DOMAIN</scope>
    <scope>INTERACTION WITH HHIP</scope>
    <scope>SUBUNIT</scope>
</reference>
<reference key="26">
    <citation type="journal article" date="2010" name="J. Biol. Chem.">
        <title>Hedgehog pathway antagonist 5E1 binds hedgehog at the pseudo-active site.</title>
        <authorList>
            <person name="Maun H.R."/>
            <person name="Wen X."/>
            <person name="Lingel A."/>
            <person name="de Sauvage F.J."/>
            <person name="Lazarus R.A."/>
            <person name="Scales S.J."/>
            <person name="Hymowitz S.G."/>
        </authorList>
    </citation>
    <scope>X-RAY CRYSTALLOGRAPHY (1.83 ANGSTROMS) OF 29-197 IN COMPLEX WITH MONOCLONAL ANTIBODY; ZINC AND CALCIUM IONS</scope>
    <scope>DOMAIN</scope>
</reference>
<reference key="27">
    <citation type="journal article" date="1996" name="Nat. Genet.">
        <title>Mutations in the human Sonic hedgehog gene cause holoprosencephaly.</title>
        <authorList>
            <person name="Roessler E."/>
            <person name="Belloni E."/>
            <person name="Gaudenz K."/>
            <person name="Jay P."/>
            <person name="Berta P."/>
            <person name="Scherer S.W."/>
            <person name="Tsui L.-C."/>
            <person name="Muenke M."/>
        </authorList>
    </citation>
    <scope>VARIANTS HPE3 ARG-31; GLY-117 AND ARG-117</scope>
</reference>
<reference key="28">
    <citation type="journal article" date="1997" name="Hum. Mol. Genet.">
        <title>Mutations in the C-terminal domain of Sonic hedgehog cause holoprosencephaly.</title>
        <authorList>
            <person name="Roessler E."/>
            <person name="Belloni E."/>
            <person name="Gaudenz K."/>
            <person name="Vargas F."/>
            <person name="Scherer S.W."/>
            <person name="Tsui L.-C."/>
            <person name="Muenke M."/>
        </authorList>
    </citation>
    <scope>VARIANTS HPE3 ARG-31; GLY-117; ARG-117; GLU-224; THR-226 AND THR-383</scope>
</reference>
<reference key="29">
    <citation type="journal article" date="1999" name="Hum. Mol. Genet.">
        <title>Expression of the Sonic hedgehog (SHH) gene during early human development and phenotypic expression of new mutations causing holoprosencephaly.</title>
        <authorList>
            <person name="Odent S."/>
            <person name="Atti-Bitach T."/>
            <person name="Blayau M."/>
            <person name="Mathieu M."/>
            <person name="Aug J."/>
            <person name="Delezo de A.L."/>
            <person name="Gall J.Y."/>
            <person name="Le Marec B."/>
            <person name="Munnich A."/>
            <person name="David V."/>
            <person name="Vekemans M."/>
        </authorList>
    </citation>
    <scope>VARIANTS HPE3 HIS-100; GLN-188 AND ASN-222</scope>
</reference>
<reference key="30">
    <citation type="journal article" date="1999" name="Hum. Mol. Genet.">
        <title>The mutational spectrum of the sonic hedgehog gene in holoprosencephaly: SHH mutations cause a significant proportion of autosomal dominant holoprosencephaly.</title>
        <authorList>
            <person name="Nanni L."/>
            <person name="Ming J.E."/>
            <person name="Bocian M."/>
            <person name="Steinhaus K."/>
            <person name="Bianchi D.W."/>
            <person name="Die-Smulders C."/>
            <person name="Giannotti A."/>
            <person name="Imaizumi K."/>
            <person name="Jones K.L."/>
            <person name="Campo M.D."/>
            <person name="Martin R.A."/>
            <person name="Meinecke P."/>
            <person name="Pierpont M.E.M."/>
            <person name="Robin N.H."/>
            <person name="Young I.D."/>
            <person name="Roessler E."/>
            <person name="Muenke M."/>
        </authorList>
    </citation>
    <scope>VARIANTS HPE3 VAL-88; LYS-115; ARG-236; 263-ARG--ALA-269 DEL; ASP-290; ALA-424 AND LEU-436</scope>
</reference>
<reference key="31">
    <citation type="journal article" date="2001" name="Am. J. Med. Genet.">
        <title>SHH mutation is associated with solitary median maxillary central incisor: a study of 13 patients and review of the literature.</title>
        <authorList>
            <person name="Nanni L."/>
            <person name="Ming J.E."/>
            <person name="Du Y."/>
            <person name="Hall R.K."/>
            <person name="Aldred M."/>
            <person name="Bankier A."/>
            <person name="Muenke M."/>
        </authorList>
    </citation>
    <scope>VARIANT SMMCI PHE-111</scope>
</reference>
<reference key="32">
    <citation type="journal article" date="2001" name="Hum. Genet.">
        <title>Identification of novel mutations in SHH and ZIC2 in a South American (ECLAMC) population with holoprosencephaly.</title>
        <authorList>
            <person name="Orioli I.M."/>
            <person name="Castilla E.E."/>
            <person name="Ming J.E."/>
            <person name="Nazer J."/>
            <person name="Burle de Aguiar M.J."/>
            <person name="Llerena J.C."/>
            <person name="Muenke M."/>
        </authorList>
    </citation>
    <scope>VARIANTS HPE3 PRO-140 AND PHE-183</scope>
</reference>
<reference key="33">
    <citation type="journal article" date="2003" name="Am. J. Med. Genet. A">
        <title>Novel mutation in sonic hedgehog in non-syndromic colobomatous microphthalmia.</title>
        <authorList>
            <person name="Schimmenti L.A."/>
            <person name="de la Cruz J."/>
            <person name="Lewis R.A."/>
            <person name="Karkera J.D."/>
            <person name="Manligas G.S."/>
            <person name="Roessler E."/>
            <person name="Muenke M."/>
        </authorList>
    </citation>
    <scope>VARIANT MCOPCB5 401-SER--GLY-408 DEL</scope>
</reference>
<reference key="34">
    <citation type="journal article" date="2004" name="Am. J. Med. Genet. A">
        <title>Solitary median maxillary central incisor syndrome: clinical case with a novel mutation of sonic hedgehog.</title>
        <authorList>
            <person name="Garavelli L."/>
            <person name="Zanacca C."/>
            <person name="Caselli G."/>
            <person name="Banchini G."/>
            <person name="Dubourg C."/>
            <person name="David V."/>
            <person name="Odent S."/>
            <person name="Gurrieri F."/>
            <person name="Neri G."/>
        </authorList>
    </citation>
    <scope>VARIANT SMMCI ALA-332</scope>
</reference>
<reference key="35">
    <citation type="journal article" date="2004" name="Eur. J. Pediatr.">
        <title>Wide phenotypic variability in families with holoprosencephaly and a sonic hedgehog mutation.</title>
        <authorList>
            <person name="Hehr U."/>
            <person name="Gross C."/>
            <person name="Diebold U."/>
            <person name="Wahl D."/>
            <person name="Beudt U."/>
            <person name="Heidemann P."/>
            <person name="Hehr A."/>
            <person name="Mueller D."/>
        </authorList>
    </citation>
    <scope>VARIANTS HPE3 ALA-27; ILE-267 AND THR-373</scope>
</reference>
<reference key="36">
    <citation type="journal article" date="2004" name="Hum. Mutat.">
        <title>Molecular screening of SHH, ZIC2, SIX3, and TGIF genes in patients with features of holoprosencephaly spectrum: mutation review and genotype-phenotype correlations.</title>
        <authorList>
            <person name="Dubourg C."/>
            <person name="Lazaro L."/>
            <person name="Pasquier L."/>
            <person name="Bendavid C."/>
            <person name="Blayau M."/>
            <person name="Le Duff F."/>
            <person name="Durou M.-R."/>
            <person name="Odent S."/>
            <person name="David V."/>
        </authorList>
    </citation>
    <scope>VARIANTS HPE3 THR-6; HIS-100; 106-LEU-ASN-107 DEL; ASP-110; ARG-150; 176-GLU--LYS-178 DEL; GLN-188; ASN-222; PRO-271; ALA-332; GLN-347; THR-354 AND PRO-381</scope>
</reference>
<reference key="37">
    <citation type="journal article" date="2005" name="Am. J. Med. Genet. A">
        <title>SHH Ile111Asp in alobar holoprosencephaly in a proposita, whose mother had only a solitary median maxillary incisor.</title>
        <authorList>
            <person name="El-Jaick K.B."/>
            <person name="Brunoni D."/>
            <person name="Castilla E.E."/>
            <person name="Moreira M.A."/>
            <person name="Orioli I.M."/>
        </authorList>
    </citation>
    <scope>VARIANT HPE3 ASN-111</scope>
</reference>
<reference key="38">
    <citation type="journal article" date="2005" name="Am. J. Med. Genet. A">
        <title>Single median maxillary central incisor, hypophyseal tumor, and SHH mutation.</title>
        <authorList>
            <person name="Ribeiro L.A."/>
            <person name="Richieri-Costa A."/>
        </authorList>
    </citation>
    <scope>VARIANT HPE3 GLN-140</scope>
</reference>
<reference key="39">
    <citation type="journal article" date="2005" name="Proc. Natl. Acad. Sci. U.S.A.">
        <title>Molecular mechanisms of Sonic hedgehog mutant effects in holoprosencephaly.</title>
        <authorList>
            <person name="Maity T."/>
            <person name="Fuse N."/>
            <person name="Beachy P.A."/>
        </authorList>
    </citation>
    <scope>CHARACTERIZATION OF VARIANTS HPE3 ARG-31; VAL-88; HIS-100; LYS-115; ARG-117; GLY-117 AND GLN-188</scope>
</reference>
<reference key="40">
    <citation type="journal article" date="2006" name="Am. J. Med. Genet. A">
        <title>Holoprosencephaly-like phenotype: clinical and genetic perspectives.</title>
        <authorList>
            <person name="Richieri-Costa A."/>
            <person name="Ribeiro L.A."/>
        </authorList>
    </citation>
    <scope>VARIANTS HPE3 GLN-140; PRO-218 AND TYR-363</scope>
</reference>
<reference key="41">
    <citation type="journal article" date="2009" name="Hum. Mutat.">
        <title>The mutational spectrum of holoprosencephaly-associated changes within the SHH gene in humans predicts loss-of-function through either key structural alterations of the ligand or its altered synthesis.</title>
        <authorList>
            <person name="Roessler E."/>
            <person name="El-Jaick K.B."/>
            <person name="Dubourg C."/>
            <person name="Velez J.I."/>
            <person name="Solomon B.D."/>
            <person name="Pineda-Alvarez D.E."/>
            <person name="Lacbawan F."/>
            <person name="Zhou N."/>
            <person name="Ouspenskaia M."/>
            <person name="Paulussen A."/>
            <person name="Smeets H.J."/>
            <person name="Hehr U."/>
            <person name="Bendavid C."/>
            <person name="Bale S."/>
            <person name="Odent S."/>
            <person name="David V."/>
            <person name="Muenke M."/>
        </authorList>
    </citation>
    <scope>VARIANTS HPE3 THR-6; PRO-17; LEU-26; ALA-27; ARG-31; PRO-39; LYS-53; VAL-83; PHE-84; VAL-88; HIS-100; ARG-102; TYR-102; 106-LEU-ASN-107 DEL; PHE-109; THR-110; ASP-110; PHE-111; ASN-111; LYS-115; GLY-117; ARG-117; MET-124; LYS-136; PRO-140; GLN-140; ASP-143; PRO-144; ASN-147; ARG-150; LYS-150; ARG-156; CYS-170; HIS-171; 176-GLU--LYS-178 DEL; ARG-183; PHE-183; TYR-183; LEU-184; GLN-188; GLU-196; 196-GLY--PRO-200 DEL; VAL-197; SER-198; PHE-198; PRO-218; ASN-222; GLU-224; THR-226; VAL-231; GLY-232; PRO-234; ARG-236; ASN-236; VAL-241; LEU-241; ASN-255; 263-ARG--ALA-269 DEL; ILE-267; PRO-271; GLU-275; TRP-280; ASP-290; ALA-296; CYS-310; SER-321; ALA-332; VAL-346; ARG-347; GLN-347; LEU-347; THR-354; LEU-362; TYR-363; CYS-364; THR-373; ARG-374; ASP-376; SER-377; 378-ALA--PHE-380 DEL; PRO-381; PRO-382; THR-383; THR-391; 402-GLY--GLY-409 DEL; 405-ASP--GLY-409 DEL; GLY-411 INS; ALA-416; ALA-424; ASN-435; LEU-436 AND ARG-456</scope>
</reference>
<accession>Q15465</accession>
<accession>A4D247</accession>
<accession>Q75MC9</accession>
<feature type="signal peptide" evidence="36">
    <location>
        <begin position="1"/>
        <end position="23"/>
    </location>
</feature>
<feature type="chain" id="PRO_0000013208" description="Sonic hedgehog protein">
    <location>
        <begin position="24"/>
        <end position="462"/>
    </location>
</feature>
<feature type="chain" id="PRO_0000013209" description="Sonic hedgehog protein N-product">
    <location>
        <begin position="24"/>
        <end position="197"/>
    </location>
</feature>
<feature type="region of interest" description="Disordered" evidence="3">
    <location>
        <begin position="279"/>
        <end position="302"/>
    </location>
</feature>
<feature type="region of interest" description="Disordered" evidence="3">
    <location>
        <begin position="395"/>
        <end position="414"/>
    </location>
</feature>
<feature type="short sequence motif" description="Cardin-Weintraub" evidence="27">
    <location>
        <begin position="32"/>
        <end position="38"/>
    </location>
</feature>
<feature type="compositionally biased region" description="Low complexity" evidence="3">
    <location>
        <begin position="283"/>
        <end position="292"/>
    </location>
</feature>
<feature type="compositionally biased region" description="Gly residues" evidence="3">
    <location>
        <begin position="400"/>
        <end position="412"/>
    </location>
</feature>
<feature type="binding site" evidence="24 49">
    <location>
        <position position="89"/>
    </location>
    <ligand>
        <name>Ca(2+)</name>
        <dbReference type="ChEBI" id="CHEBI:29108"/>
        <label>1</label>
    </ligand>
</feature>
<feature type="binding site" evidence="24 49">
    <location>
        <position position="90"/>
    </location>
    <ligand>
        <name>Ca(2+)</name>
        <dbReference type="ChEBI" id="CHEBI:29108"/>
        <label>1</label>
    </ligand>
</feature>
<feature type="binding site" evidence="24 49">
    <location>
        <position position="90"/>
    </location>
    <ligand>
        <name>Ca(2+)</name>
        <dbReference type="ChEBI" id="CHEBI:29108"/>
        <label>2</label>
    </ligand>
</feature>
<feature type="binding site" evidence="24 49">
    <location>
        <position position="95"/>
    </location>
    <ligand>
        <name>Ca(2+)</name>
        <dbReference type="ChEBI" id="CHEBI:29108"/>
        <label>1</label>
    </ligand>
</feature>
<feature type="binding site" evidence="24 49">
    <location>
        <position position="125"/>
    </location>
    <ligand>
        <name>Ca(2+)</name>
        <dbReference type="ChEBI" id="CHEBI:29108"/>
        <label>1</label>
    </ligand>
</feature>
<feature type="binding site" evidence="24 49">
    <location>
        <position position="126"/>
    </location>
    <ligand>
        <name>Ca(2+)</name>
        <dbReference type="ChEBI" id="CHEBI:29108"/>
        <label>1</label>
    </ligand>
</feature>
<feature type="binding site" evidence="24 49">
    <location>
        <position position="126"/>
    </location>
    <ligand>
        <name>Ca(2+)</name>
        <dbReference type="ChEBI" id="CHEBI:29108"/>
        <label>2</label>
    </ligand>
</feature>
<feature type="binding site" evidence="24 49">
    <location>
        <position position="129"/>
    </location>
    <ligand>
        <name>Ca(2+)</name>
        <dbReference type="ChEBI" id="CHEBI:29108"/>
        <label>2</label>
    </ligand>
</feature>
<feature type="binding site" evidence="24 49">
    <location>
        <position position="131"/>
    </location>
    <ligand>
        <name>Ca(2+)</name>
        <dbReference type="ChEBI" id="CHEBI:29108"/>
        <label>2</label>
    </ligand>
</feature>
<feature type="binding site" evidence="6 24 48 49">
    <location>
        <position position="140"/>
    </location>
    <ligand>
        <name>Zn(2+)</name>
        <dbReference type="ChEBI" id="CHEBI:29105"/>
    </ligand>
</feature>
<feature type="binding site" evidence="6 24 48 49">
    <location>
        <position position="147"/>
    </location>
    <ligand>
        <name>Zn(2+)</name>
        <dbReference type="ChEBI" id="CHEBI:29105"/>
    </ligand>
</feature>
<feature type="binding site" evidence="6 24 48 49">
    <location>
        <position position="182"/>
    </location>
    <ligand>
        <name>Zn(2+)</name>
        <dbReference type="ChEBI" id="CHEBI:29105"/>
    </ligand>
</feature>
<feature type="site" description="Cleavage; by autolysis" evidence="1">
    <location>
        <begin position="197"/>
        <end position="198"/>
    </location>
</feature>
<feature type="site" description="Involved in cholesterol transfer" evidence="1">
    <location>
        <position position="243"/>
    </location>
</feature>
<feature type="site" description="Involved in auto-cleavage" evidence="1">
    <location>
        <position position="267"/>
    </location>
</feature>
<feature type="site" description="Essential for auto-cleavage" evidence="1">
    <location>
        <position position="270"/>
    </location>
</feature>
<feature type="lipid moiety-binding region" description="N-palmitoyl cysteine" evidence="20 33 36">
    <location>
        <position position="24"/>
    </location>
</feature>
<feature type="lipid moiety-binding region" description="Cholesterol glycine ester" evidence="2">
    <location>
        <position position="197"/>
    </location>
</feature>
<feature type="glycosylation site" description="N-linked (GlcNAc...) asparagine" evidence="17">
    <location>
        <position position="278"/>
    </location>
</feature>
<feature type="sequence variant" id="VAR_023804" description="In HPE3." evidence="13 22">
    <original>R</original>
    <variation>T</variation>
    <location>
        <position position="6"/>
    </location>
</feature>
<feature type="sequence variant" id="VAR_062592" description="In HPE3." evidence="22">
    <original>L</original>
    <variation>P</variation>
    <location>
        <position position="17"/>
    </location>
</feature>
<feature type="sequence variant" id="VAR_062593" description="In HPE3." evidence="22">
    <original>P</original>
    <variation>L</variation>
    <location>
        <position position="26"/>
    </location>
</feature>
<feature type="sequence variant" id="VAR_039888" description="In HPE3." evidence="12 22">
    <original>G</original>
    <variation>A</variation>
    <location>
        <position position="27"/>
    </location>
</feature>
<feature type="sequence variant" id="VAR_003619" description="In HPE3; the same mutation in the mouse sequence introduces a cleavage site for a furin-like protease resulting in abnormal protein processing; cleavage at this site removes 11 amino acids from the N-terminal domain and reduces affinity of Shh for Ptch1 and signaling potency in assays using chicken embryo neural plate explants and mouse C3H10T1/2 stem cells; dbSNP:rs28936675." evidence="16 22 34 35">
    <original>G</original>
    <variation>R</variation>
    <location>
        <position position="31"/>
    </location>
</feature>
<feature type="sequence variant" id="VAR_062594" description="In HPE3; dbSNP:rs1428916820." evidence="22">
    <original>L</original>
    <variation>P</variation>
    <location>
        <position position="39"/>
    </location>
</feature>
<feature type="sequence variant" id="VAR_062595" description="In HPE3." evidence="22">
    <original>E</original>
    <variation>K</variation>
    <location>
        <position position="53"/>
    </location>
</feature>
<feature type="sequence variant" id="VAR_062596" description="In HPE3." evidence="22">
    <original>D</original>
    <variation>V</variation>
    <location>
        <position position="83"/>
    </location>
</feature>
<feature type="sequence variant" id="VAR_062597" description="In HPE3." evidence="22">
    <original>I</original>
    <variation>F</variation>
    <location>
        <position position="84"/>
    </location>
</feature>
<feature type="sequence variant" id="VAR_009163" description="In HPE3; familial; the same mutation in the mouse sequence moderately reduces Ptch1 binding in vitro and signaling potency in chicken embryo neural plate explant assays compared with wild-type sequence; dbSNP:rs104894050." evidence="5 16 22">
    <original>D</original>
    <variation>V</variation>
    <location>
        <position position="88"/>
    </location>
</feature>
<feature type="sequence variant" id="VAR_009164" description="In HPE3; sporadic; in the mouse sequence does not affect signaling activity in any of Shh signaling assays and causes no apparent defects in cholesterol-mediated autoprocessing reactions; dbSNP:rs587778792." evidence="4 13 16 22">
    <original>Q</original>
    <variation>H</variation>
    <location>
        <position position="100"/>
    </location>
</feature>
<feature type="sequence variant" id="VAR_062598" description="In HPE3." evidence="22">
    <original>C</original>
    <variation>R</variation>
    <location>
        <position position="102"/>
    </location>
</feature>
<feature type="sequence variant" id="VAR_062599" description="In HPE3." evidence="22">
    <original>C</original>
    <variation>Y</variation>
    <location>
        <position position="102"/>
    </location>
</feature>
<feature type="sequence variant" id="VAR_023805" description="In HPE3." evidence="13 22">
    <location>
        <begin position="106"/>
        <end position="107"/>
    </location>
</feature>
<feature type="sequence variant" id="VAR_062600" description="In HPE3." evidence="22">
    <original>L</original>
    <variation>F</variation>
    <location>
        <position position="109"/>
    </location>
</feature>
<feature type="sequence variant" id="VAR_023806" description="In HPE3." evidence="13 22">
    <original>A</original>
    <variation>D</variation>
    <location>
        <position position="110"/>
    </location>
</feature>
<feature type="sequence variant" id="VAR_062601" description="In HPE3." evidence="22">
    <original>A</original>
    <variation>T</variation>
    <location>
        <position position="110"/>
    </location>
</feature>
<feature type="sequence variant" id="VAR_017883" description="In SMMCI; dbSNP:rs104894049." evidence="7 22">
    <original>I</original>
    <variation>F</variation>
    <location>
        <position position="111"/>
    </location>
</feature>
<feature type="sequence variant" id="VAR_039889" description="In HPE3." evidence="14 22">
    <original>I</original>
    <variation>N</variation>
    <location>
        <position position="111"/>
    </location>
</feature>
<feature type="sequence variant" id="VAR_009165" description="In HPE3; familial; in the mouse sequence shows no change in activities at different temperatures; dbSNP:rs267607047." evidence="5 16 22">
    <original>N</original>
    <variation>K</variation>
    <location>
        <position position="115"/>
    </location>
</feature>
<feature type="sequence variant" id="VAR_003620" description="In HPE3; the same mutation in the mouse sequence causes a failure of Shh processing leading to retention of the immature glycosylated protein within the endoplasmic reticulum of transfected cells; causes a temperature-dependent conformational change that allows Shh to bind Ptch1 at 4 or 32 degrees Celsius but not at 37 degrees Celsius; the mutation drastically reduces signaling potency in chicken embryo neural plate explant assays; dbSNP:rs104894040." evidence="16 22 34 35">
    <original>W</original>
    <variation>G</variation>
    <location>
        <position position="117"/>
    </location>
</feature>
<feature type="sequence variant" id="VAR_003621" description="In HPE3; the same mutation in the mouse sequence causes a failure of Shh processing leading to retention of the immature glycosylated protein within the endoplasmic reticulum of transfected cells; causes a temperature-dependent conformational change that allows Shh to bind Ptch1 at 4 or 32 degrees Celsius but not at 37 degrees Celsius; drastically reduces signaling potency in chicken embryo neural plate explant assays; dbSNP:rs104894040." evidence="16 22 34 35">
    <original>W</original>
    <variation>R</variation>
    <location>
        <position position="117"/>
    </location>
</feature>
<feature type="sequence variant" id="VAR_062602" description="In HPE3; dbSNP:rs1803365850." evidence="22">
    <original>V</original>
    <variation>M</variation>
    <location>
        <position position="124"/>
    </location>
</feature>
<feature type="sequence variant" id="VAR_062603" description="In HPE3." evidence="22">
    <original>E</original>
    <variation>K</variation>
    <location>
        <position position="136"/>
    </location>
</feature>
<feature type="sequence variant" id="VAR_039890" description="In HPE3." evidence="8 22">
    <original>H</original>
    <variation>P</variation>
    <location>
        <position position="140"/>
    </location>
</feature>
<feature type="sequence variant" id="VAR_039891" description="In HPE3; dbSNP:rs2117137771." evidence="15 18 22">
    <original>H</original>
    <variation>Q</variation>
    <location>
        <position position="140"/>
    </location>
</feature>
<feature type="sequence variant" id="VAR_062604" description="In HPE3." evidence="22">
    <original>G</original>
    <variation>D</variation>
    <location>
        <position position="143"/>
    </location>
</feature>
<feature type="sequence variant" id="VAR_062605" description="In HPE3." evidence="22">
    <original>R</original>
    <variation>P</variation>
    <location>
        <position position="144"/>
    </location>
</feature>
<feature type="sequence variant" id="VAR_062606" description="In HPE3." evidence="22">
    <original>D</original>
    <variation>N</variation>
    <location>
        <position position="147"/>
    </location>
</feature>
<feature type="sequence variant" id="VAR_062607" description="In HPE3." evidence="22">
    <original>T</original>
    <variation>K</variation>
    <location>
        <position position="150"/>
    </location>
</feature>
<feature type="sequence variant" id="VAR_023807" description="In HPE3." evidence="13 22">
    <original>T</original>
    <variation>R</variation>
    <location>
        <position position="150"/>
    </location>
</feature>
<feature type="sequence variant" id="VAR_062608" description="In HPE3; dbSNP:rs1554494372." evidence="22">
    <original>S</original>
    <variation>R</variation>
    <location>
        <position position="156"/>
    </location>
</feature>
<feature type="sequence variant" id="VAR_062609" description="In HPE3." evidence="22">
    <original>F</original>
    <variation>C</variation>
    <location>
        <position position="170"/>
    </location>
</feature>
<feature type="sequence variant" id="VAR_062610" description="In HPE3." evidence="22">
    <original>D</original>
    <variation>H</variation>
    <location>
        <position position="171"/>
    </location>
</feature>
<feature type="sequence variant" id="VAR_023808" description="In HPE3." evidence="13 22">
    <location>
        <begin position="176"/>
        <end position="178"/>
    </location>
</feature>
<feature type="sequence variant" id="VAR_039892" description="In HPE3." evidence="8 22">
    <original>C</original>
    <variation>F</variation>
    <location>
        <position position="183"/>
    </location>
</feature>
<feature type="sequence variant" id="VAR_062611" description="In HPE3." evidence="22">
    <original>C</original>
    <variation>R</variation>
    <location>
        <position position="183"/>
    </location>
</feature>
<feature type="sequence variant" id="VAR_062612" description="In HPE3." evidence="22">
    <original>C</original>
    <variation>Y</variation>
    <location>
        <position position="183"/>
    </location>
</feature>
<feature type="sequence variant" id="VAR_062613" description="In HPE3." evidence="22">
    <original>S</original>
    <variation>L</variation>
    <location>
        <position position="184"/>
    </location>
</feature>
<feature type="sequence variant" id="VAR_009166" description="In HPE3; familial; dbSNP:rs587778799." evidence="4 13 16 22">
    <original>E</original>
    <variation>Q</variation>
    <location>
        <position position="188"/>
    </location>
</feature>
<feature type="sequence variant" id="VAR_062614" description="In HPE3." evidence="22">
    <location>
        <begin position="196"/>
        <end position="200"/>
    </location>
</feature>
<feature type="sequence variant" id="VAR_062615" description="In HPE3; dbSNP:rs752650571." evidence="22">
    <original>G</original>
    <variation>E</variation>
    <location>
        <position position="196"/>
    </location>
</feature>
<feature type="sequence variant" id="VAR_062616" description="In HPE3." evidence="22">
    <original>G</original>
    <variation>V</variation>
    <location>
        <position position="197"/>
    </location>
</feature>
<feature type="sequence variant" id="VAR_062617" description="In HPE3." evidence="22">
    <original>C</original>
    <variation>F</variation>
    <location>
        <position position="198"/>
    </location>
</feature>
<feature type="sequence variant" id="VAR_062618" description="In HPE3." evidence="22">
    <original>C</original>
    <variation>S</variation>
    <location>
        <position position="198"/>
    </location>
</feature>
<feature type="sequence variant" id="VAR_062619" description="In HPE3." evidence="18 22">
    <original>L</original>
    <variation>P</variation>
    <location>
        <position position="218"/>
    </location>
</feature>
<feature type="sequence variant" id="VAR_009167" description="In HPE3; familial; dbSNP:rs587778805." evidence="4 13 22">
    <original>D</original>
    <variation>N</variation>
    <location>
        <position position="222"/>
    </location>
</feature>
<feature type="sequence variant" id="VAR_009168" description="In HPE3; dbSNP:rs104894042." evidence="22 35">
    <original>V</original>
    <variation>E</variation>
    <location>
        <position position="224"/>
    </location>
</feature>
<feature type="sequence variant" id="VAR_009169" description="In HPE3; familial; dbSNP:rs104894043." evidence="22 35">
    <original>A</original>
    <variation>T</variation>
    <location>
        <position position="226"/>
    </location>
</feature>
<feature type="sequence variant" id="VAR_062620" description="In HPE3." evidence="22">
    <original>G</original>
    <variation>V</variation>
    <location>
        <position position="231"/>
    </location>
</feature>
<feature type="sequence variant" id="VAR_062621" description="In HPE3; dbSNP:rs1347054935." evidence="22">
    <original>R</original>
    <variation>G</variation>
    <location>
        <position position="232"/>
    </location>
</feature>
<feature type="sequence variant" id="VAR_062622" description="In HPE3." evidence="22">
    <original>L</original>
    <variation>P</variation>
    <location>
        <position position="234"/>
    </location>
</feature>
<feature type="sequence variant" id="VAR_062623" description="In HPE3." evidence="22">
    <original>S</original>
    <variation>N</variation>
    <location>
        <position position="236"/>
    </location>
</feature>
<feature type="sequence variant" id="VAR_009170" description="In HPE3; familial; dbSNP:rs587778806." evidence="5 22">
    <original>S</original>
    <variation>R</variation>
    <location>
        <position position="236"/>
    </location>
</feature>
<feature type="sequence variant" id="VAR_062624" description="In HPE3." evidence="22">
    <original>F</original>
    <variation>L</variation>
    <location>
        <position position="241"/>
    </location>
</feature>
<feature type="sequence variant" id="VAR_062625" description="In HPE3." evidence="22">
    <original>F</original>
    <variation>V</variation>
    <location>
        <position position="241"/>
    </location>
</feature>
<feature type="sequence variant" id="VAR_062626" description="In HPE3." evidence="22">
    <original>I</original>
    <variation>N</variation>
    <location>
        <position position="255"/>
    </location>
</feature>
<feature type="sequence variant" id="VAR_009171" description="In HPE3; sporadic." evidence="5 22">
    <location>
        <begin position="263"/>
        <end position="269"/>
    </location>
</feature>
<feature type="sequence variant" id="VAR_039893" description="In HPE3." evidence="12 22">
    <original>T</original>
    <variation>I</variation>
    <location>
        <position position="267"/>
    </location>
</feature>
<feature type="sequence variant" id="VAR_023809" description="In HPE3." evidence="13 22">
    <original>L</original>
    <variation>P</variation>
    <location>
        <position position="271"/>
    </location>
</feature>
<feature type="sequence variant" id="VAR_062627" description="In HPE3; dbSNP:rs556192490." evidence="22">
    <original>A</original>
    <variation>E</variation>
    <location>
        <position position="275"/>
    </location>
</feature>
<feature type="sequence variant" id="VAR_062628" description="In HPE3." evidence="22">
    <original>S</original>
    <variation>W</variation>
    <location>
        <position position="280"/>
    </location>
</feature>
<feature type="sequence variant" id="VAR_009172" description="In HPE3; sporadic; dbSNP:rs104894047." evidence="5 22">
    <original>G</original>
    <variation>D</variation>
    <location>
        <position position="290"/>
    </location>
</feature>
<feature type="sequence variant" id="VAR_062629" description="In HPE3; uncertain significance; dbSNP:rs955894039." evidence="22">
    <original>G</original>
    <variation>A</variation>
    <location>
        <position position="296"/>
    </location>
</feature>
<feature type="sequence variant" id="VAR_062630" description="In HPE3." evidence="22">
    <original>R</original>
    <variation>C</variation>
    <location>
        <position position="310"/>
    </location>
</feature>
<feature type="sequence variant" id="VAR_062631" description="In HPE3; dbSNP:rs1803249091." evidence="22">
    <original>R</original>
    <variation>S</variation>
    <location>
        <position position="321"/>
    </location>
</feature>
<feature type="sequence variant" id="VAR_023810" description="In HPE3 and SMMCI; dbSNP:rs104894052." evidence="11 13 22">
    <original>V</original>
    <variation>A</variation>
    <location>
        <position position="332"/>
    </location>
</feature>
<feature type="sequence variant" id="VAR_062632" description="In HPE3; dbSNP:rs2117126655." evidence="22">
    <original>A</original>
    <variation>V</variation>
    <location>
        <position position="346"/>
    </location>
</feature>
<feature type="sequence variant" id="VAR_062633" description="In HPE3; dbSNP:rs886042458." evidence="22">
    <original>P</original>
    <variation>L</variation>
    <location>
        <position position="347"/>
    </location>
</feature>
<feature type="sequence variant" id="VAR_023811" description="In HPE3." evidence="13 22">
    <original>P</original>
    <variation>Q</variation>
    <location>
        <position position="347"/>
    </location>
</feature>
<feature type="sequence variant" id="VAR_062634" description="In HPE3; dbSNP:rs886042458." evidence="22">
    <original>P</original>
    <variation>R</variation>
    <location>
        <position position="347"/>
    </location>
</feature>
<feature type="sequence variant" id="VAR_023812" description="In HPE3; dbSNP:rs2117126521." evidence="13 22">
    <original>I</original>
    <variation>T</variation>
    <location>
        <position position="354"/>
    </location>
</feature>
<feature type="sequence variant" id="VAR_062635" description="In HPE3; dbSNP:rs866005910." evidence="22">
    <original>S</original>
    <variation>L</variation>
    <location>
        <position position="362"/>
    </location>
</feature>
<feature type="sequence variant" id="VAR_062636" description="In HPE3." evidence="18 22">
    <original>C</original>
    <variation>Y</variation>
    <location>
        <position position="363"/>
    </location>
</feature>
<feature type="sequence variant" id="VAR_062637" description="In HPE3." evidence="22">
    <original>Y</original>
    <variation>C</variation>
    <location>
        <position position="364"/>
    </location>
</feature>
<feature type="sequence variant" id="VAR_039894" description="In HPE3." evidence="12 22">
    <original>A</original>
    <variation>T</variation>
    <location>
        <position position="373"/>
    </location>
</feature>
<feature type="sequence variant" id="VAR_062638" description="In HPE3." evidence="22">
    <original>H</original>
    <variation>R</variation>
    <location>
        <position position="374"/>
    </location>
</feature>
<feature type="sequence variant" id="VAR_062639" description="In HPE3." evidence="22">
    <original>A</original>
    <variation>D</variation>
    <location>
        <position position="376"/>
    </location>
</feature>
<feature type="sequence variant" id="VAR_062640" description="In HPE3." evidence="22">
    <original>F</original>
    <variation>S</variation>
    <location>
        <position position="377"/>
    </location>
</feature>
<feature type="sequence variant" id="VAR_009173" description="In HPE3; familial." evidence="22">
    <location>
        <begin position="378"/>
        <end position="380"/>
    </location>
</feature>
<feature type="sequence variant" id="VAR_023813" description="In HPE3." evidence="13 22">
    <original>R</original>
    <variation>P</variation>
    <location>
        <position position="381"/>
    </location>
</feature>
<feature type="sequence variant" id="VAR_062641" description="In HPE3." evidence="22">
    <original>L</original>
    <variation>P</variation>
    <location>
        <position position="382"/>
    </location>
</feature>
<feature type="sequence variant" id="VAR_009174" description="In HPE3; sporadic; dbSNP:rs137853341." evidence="22 35">
    <original>A</original>
    <variation>T</variation>
    <location>
        <position position="383"/>
    </location>
</feature>
<feature type="sequence variant" id="VAR_062642" description="In HPE3; uncertain significance; dbSNP:rs1131692264." evidence="22">
    <original>A</original>
    <variation>T</variation>
    <location>
        <position position="391"/>
    </location>
</feature>
<feature type="sequence variant" id="VAR_017884" description="In ocular coloboma." evidence="9">
    <location>
        <begin position="401"/>
        <end position="408"/>
    </location>
</feature>
<feature type="sequence variant" id="VAR_062643" description="In HPE3; uncertain significance." evidence="22">
    <location>
        <begin position="402"/>
        <end position="409"/>
    </location>
</feature>
<feature type="sequence variant" id="VAR_009175" description="In HPE3; familial.">
    <location>
        <begin position="404"/>
        <end position="408"/>
    </location>
</feature>
<feature type="sequence variant" id="VAR_062644" description="In HPE3; uncertain significance." evidence="22">
    <location>
        <begin position="405"/>
        <end position="409"/>
    </location>
</feature>
<feature type="sequence variant" id="VAR_062645" description="In HPE3; uncertain significance." evidence="22">
    <original>G</original>
    <variation>GG</variation>
    <location>
        <position position="411"/>
    </location>
</feature>
<feature type="sequence variant" id="VAR_062646" description="In HPE3; uncertain significance; dbSNP:rs1412744230." evidence="22">
    <original>T</original>
    <variation>A</variation>
    <location>
        <position position="416"/>
    </location>
</feature>
<feature type="sequence variant" id="VAR_009176" description="In HPE3; familial; dbSNP:rs104894048." evidence="5 22">
    <original>P</original>
    <variation>A</variation>
    <location>
        <position position="424"/>
    </location>
</feature>
<feature type="sequence variant" id="VAR_062647" description="In HPE3." evidence="22">
    <original>Y</original>
    <variation>N</variation>
    <location>
        <position position="435"/>
    </location>
</feature>
<feature type="sequence variant" id="VAR_009177" description="In HPE3; sporadic." evidence="5 22">
    <original>S</original>
    <variation>L</variation>
    <location>
        <position position="436"/>
    </location>
</feature>
<feature type="sequence variant" id="VAR_062648" description="In HPE3; uncertain significance." evidence="22">
    <original>G</original>
    <variation>R</variation>
    <location>
        <position position="456"/>
    </location>
</feature>
<feature type="mutagenesis site" description="Abolishes palmitoylation." evidence="20 33 36">
    <original>C</original>
    <variation>S</variation>
    <variation>A</variation>
    <location>
        <position position="24"/>
    </location>
</feature>
<feature type="strand" evidence="50">
    <location>
        <begin position="30"/>
        <end position="32"/>
    </location>
</feature>
<feature type="strand" evidence="52">
    <location>
        <begin position="47"/>
        <end position="51"/>
    </location>
</feature>
<feature type="turn" evidence="52">
    <location>
        <begin position="56"/>
        <end position="59"/>
    </location>
</feature>
<feature type="helix" evidence="52">
    <location>
        <begin position="71"/>
        <end position="74"/>
    </location>
</feature>
<feature type="strand" evidence="52">
    <location>
        <begin position="84"/>
        <end position="86"/>
    </location>
</feature>
<feature type="strand" evidence="51">
    <location>
        <begin position="91"/>
        <end position="93"/>
    </location>
</feature>
<feature type="helix" evidence="52">
    <location>
        <begin position="94"/>
        <end position="96"/>
    </location>
</feature>
<feature type="helix" evidence="52">
    <location>
        <begin position="100"/>
        <end position="116"/>
    </location>
</feature>
<feature type="strand" evidence="52">
    <location>
        <begin position="122"/>
        <end position="126"/>
    </location>
</feature>
<feature type="helix" evidence="52">
    <location>
        <begin position="139"/>
        <end position="141"/>
    </location>
</feature>
<feature type="strand" evidence="52">
    <location>
        <begin position="145"/>
        <end position="150"/>
    </location>
</feature>
<feature type="helix" evidence="52">
    <location>
        <begin position="155"/>
        <end position="157"/>
    </location>
</feature>
<feature type="helix" evidence="52">
    <location>
        <begin position="158"/>
        <end position="167"/>
    </location>
</feature>
<feature type="strand" evidence="52">
    <location>
        <begin position="171"/>
        <end position="177"/>
    </location>
</feature>
<feature type="strand" evidence="52">
    <location>
        <begin position="180"/>
        <end position="184"/>
    </location>
</feature>
<feature type="helix" evidence="51">
    <location>
        <begin position="188"/>
        <end position="190"/>
    </location>
</feature>
<comment type="function">
    <molecule>Sonic hedgehog protein</molecule>
    <text evidence="2">The C-terminal part of the sonic hedgehog protein precursor displays an autoproteolysis and a cholesterol transferase activity (By similarity). Both activities result in the cleavage of the full-length protein into two parts (ShhN and ShhC) followed by the covalent attachment of a cholesterol moiety to the C-terminal of the newly generated ShhN (By similarity). Both activities occur in the endoplasmic reticulum (By similarity). Once cleaved, ShhC is degraded in the endoplasmic reticulum (By similarity).</text>
</comment>
<comment type="function">
    <molecule>Sonic hedgehog protein N-product</molecule>
    <text evidence="2 6 31 38">The dually lipidated sonic hedgehog protein N-product (ShhNp) is a morphogen which is essential for a variety of patterning events during development. Induces ventral cell fate in the neural tube and somites (PubMed:24863049). Involved in the patterning of the anterior-posterior axis of the developing limb bud (By similarity). Essential for axon guidance (By similarity). Binds to the patched (PTCH1) receptor, which functions in association with smoothened (SMO), to activate the transcription of target genes (PubMed:10753901). In the absence of SHH, PTCH1 represses the constitutive signaling activity of SMO (PubMed:10753901).</text>
</comment>
<comment type="catalytic activity">
    <molecule>Sonic hedgehog protein</molecule>
    <reaction evidence="2">
        <text>glycyl-L-cysteinyl-[protein] + cholesterol + H(+) = [protein]-C-terminal glycyl cholesterol ester + N-terminal L-cysteinyl-[protein]</text>
        <dbReference type="Rhea" id="RHEA:59504"/>
        <dbReference type="Rhea" id="RHEA-COMP:12707"/>
        <dbReference type="Rhea" id="RHEA-COMP:15369"/>
        <dbReference type="Rhea" id="RHEA-COMP:15374"/>
        <dbReference type="ChEBI" id="CHEBI:15378"/>
        <dbReference type="ChEBI" id="CHEBI:16113"/>
        <dbReference type="ChEBI" id="CHEBI:65250"/>
        <dbReference type="ChEBI" id="CHEBI:143135"/>
        <dbReference type="ChEBI" id="CHEBI:143140"/>
    </reaction>
    <physiologicalReaction direction="left-to-right" evidence="2">
        <dbReference type="Rhea" id="RHEA:59505"/>
    </physiologicalReaction>
</comment>
<comment type="subunit">
    <molecule>Sonic hedgehog protein N-product</molecule>
    <text evidence="30">Multimer.</text>
</comment>
<comment type="subunit">
    <text evidence="2 21 25 26 30">Interacts with HHATL/GUP1 which negatively regulates HHAT-mediated palmitoylation of the SHH N-terminus (By similarity). Interacts with BOC and CDON (By similarity). Interacts with HHIP (PubMed:19561609). Interacts with DISP1 via its cholesterol anchor (PubMed:22677548, PubMed:22902404). Interacts with SCUBE2 (PubMed:22677548, PubMed:24522195). Interacts with glypican GPC3 (By similarity).</text>
</comment>
<comment type="interaction">
    <interactant intactId="EBI-11666886">
        <id>Q15465</id>
    </interactant>
    <interactant intactId="EBI-6598521">
        <id>Q96QV1</id>
        <label>HHIP</label>
    </interactant>
    <organismsDiffer>false</organismsDiffer>
    <experiments>10</experiments>
</comment>
<comment type="interaction">
    <interactant intactId="EBI-11666886">
        <id>Q15465</id>
    </interactant>
    <interactant intactId="EBI-8775406">
        <id>Q13635</id>
        <label>PTCH1</label>
    </interactant>
    <organismsDiffer>false</organismsDiffer>
    <experiments>2</experiments>
</comment>
<comment type="interaction">
    <interactant intactId="EBI-11666886">
        <id>Q15465</id>
    </interactant>
    <interactant intactId="EBI-13635488">
        <id>Q13635-1</id>
        <label>PTCH1</label>
    </interactant>
    <organismsDiffer>false</organismsDiffer>
    <experiments>11</experiments>
</comment>
<comment type="subcellular location">
    <molecule>Sonic hedgehog protein</molecule>
    <subcellularLocation>
        <location evidence="42">Endoplasmic reticulum membrane</location>
    </subcellularLocation>
    <subcellularLocation>
        <location evidence="42">Golgi apparatus membrane</location>
    </subcellularLocation>
    <subcellularLocation>
        <location evidence="28">Secreted</location>
    </subcellularLocation>
    <text evidence="42">Co-localizes with HHAT in the ER and Golgi membrane.</text>
</comment>
<comment type="subcellular location">
    <molecule>Sonic hedgehog protein N-product</molecule>
    <subcellularLocation>
        <location evidence="2">Cell membrane</location>
        <topology evidence="2">Lipid-anchor</topology>
    </subcellularLocation>
    <text evidence="45 46">The dual-lipidated sonic hedgehog protein N-product (ShhNp) is firmly tethered to the cell membrane where it forms multimers (PubMed:24522195). Further solubilization and release from the cell surface seem to be achieved through different mechanisms, including the interaction with DISP1 and SCUBE2, movement by lipoprotein particles, transport by cellular extensions called cytonemes or by the proteolytic removal of both terminal lipidated peptides (PubMed:24522195, PubMed:26875496).</text>
</comment>
<comment type="domain">
    <molecule>Sonic hedgehog protein N-product</molecule>
    <text evidence="6 21 24">Binds calcium and zinc ions; this stabilizes the protein fold and is essential for protein-protein interactions mediated by this domain.</text>
</comment>
<comment type="domain">
    <molecule>Sonic hedgehog protein N-product</molecule>
    <text evidence="27 30">The Cardin-Weintraub (CW) motif is required for heparan sulfate binding of the solubilized ShhNp (PubMed:23118222). The N-terminal palmitoylated peptide is cleaved at the heparan sulfate-binding Cardin-Weintraub (CW) motif site (PubMed:24522195). The cleavage reduced the interactions with heparan sulfate. The cleavage is enhanced by SCUBE2 (PubMed:24522195).</text>
</comment>
<comment type="PTM">
    <molecule>Sonic hedgehog protein</molecule>
    <text evidence="2 40 45">The C-terminal domain displays an autoproteolysis activity and a cholesterol transferase activity (By similarity). Both activities result in the cleavage of the full-length protein and covalent attachment of a cholesterol moiety to the C-terminal of the newly generated N-terminal fragment (ShhN) (By similarity). Cholesterylation is required for the sonic hedgehog protein N-product targeting to lipid rafts and multimerization (PubMed:24522195, PubMed:26875496). ShhN is the active species in both local and long-range signaling, whereas the C-product (ShhC) is degraded in the endoplasmic reticulum (By similarity).</text>
</comment>
<comment type="PTM">
    <molecule>Sonic hedgehog protein N-product</molecule>
    <text evidence="2 30">N-palmitoylation by HHAT of ShhN is required for sonic hedgehog protein N-product multimerization and full activity (By similarity). It is a prerequisite for the membrane-proximal positioning and the subsequent shedding of this N-terminal peptide (PubMed:24522195).</text>
</comment>
<comment type="PTM">
    <molecule>Sonic hedgehog protein N-product</molecule>
    <text evidence="27 30">The lipidated N- and C-terminal peptides of ShhNp can be cleaved (shedding) (PubMed:24522195). The N-terminal palmitoylated peptide is cleaved at the Cardin-Weintraub (CW) motif site (PubMed:24522195). The cleavage reduced the interactions with heparan sulfate. The cleavage is enhanced by SCUBE2 (PubMed:23118222, PubMed:24522195).</text>
</comment>
<comment type="mass spectrometry" mass="19.56" method="Electrospray" evidence="36">
    <molecule>Sonic hedgehog protein N-product</molecule>
    <text>Sonic hedgehog protein N-product: soluble product, purified from insect cells.</text>
</comment>
<comment type="mass spectrometry" mass="20.167" method="Electrospray" evidence="36">
    <molecule>Sonic hedgehog protein N-product</molecule>
    <text>Sonic hedgehog protein N-product: Membrane-bound product, purified from insect cells.</text>
</comment>
<comment type="disease" evidence="9">
    <disease id="DI-00760">
        <name>Microphthalmia/Coloboma 5</name>
        <acronym>MCOPCB5</acronym>
        <description>A disorder of eye formation, ranging from small size of a single eye to complete bilateral absence of ocular tissues. Ocular abnormalities like opacities of the cornea and lens, scaring of the retina and choroid, and other abnormalities may also be present. Ocular colobomas are a set of malformations resulting from abnormal morphogenesis of the optic cup and stalk, and the fusion of the fetal fissure (optic fissure).</description>
        <dbReference type="MIM" id="611638"/>
    </disease>
    <text>The disease is caused by variants affecting the gene represented in this entry.</text>
</comment>
<comment type="disease" evidence="4 5 8 12 13 14 15 16 18 22 34 35">
    <disease id="DI-00567">
        <name>Holoprosencephaly 3</name>
        <acronym>HPE3</acronym>
        <description>A structural anomaly of the brain, in which the developing forebrain fails to correctly separate into right and left hemispheres. Holoprosencephaly is genetically heterogeneous and associated with several distinct facies and phenotypic variability. The majority of holoprosencephaly type 3 cases are apparently sporadic, although clear examples of autosomal dominant inheritance have been described.</description>
        <dbReference type="MIM" id="142945"/>
    </disease>
    <text>The disease is caused by variants affecting the gene represented in this entry.</text>
</comment>
<comment type="disease" evidence="7 11">
    <disease id="DI-02316">
        <name>Solitary median maxillary central incisor</name>
        <acronym>SMMCI</acronym>
        <description>Rare dental anomaly characterized by the congenital absence of one maxillary central incisor.</description>
        <dbReference type="MIM" id="147250"/>
    </disease>
    <text>The disease is caused by variants affecting the gene represented in this entry.</text>
</comment>
<comment type="disease" evidence="10 19">
    <disease id="DI-02391">
        <name>Triphalangeal thumb with polysyndactyly</name>
        <acronym>TPTPS</acronym>
        <description>Autosomal dominant syndrome. It is characterized by a wide spectrum of pre- and post-axial abnormalities due to altered SHH expression pattern during limb development.</description>
        <dbReference type="MIM" id="190605"/>
    </disease>
    <text>The gene represented in this entry is involved in disease pathogenesis. SHH expression is altered due to disease-causing variants located in intron 5 of LMBR1 disrupt a long-range, cis-regulatory element of SHH.</text>
</comment>
<comment type="disease" evidence="10">
    <disease id="DI-03095">
        <name>Preaxial polydactyly 2</name>
        <acronym>PPD2</acronym>
        <description>Polydactyly consists of duplication of the distal phalanx. The thumb in PPD2 is usually opposable and possesses a normal metacarpal.</description>
        <dbReference type="MIM" id="174500"/>
    </disease>
    <text evidence="10">The gene represented in this entry is involved in disease pathogenesis. Mutations located in intron 5 of LMBR1 disrupt a long-range, cis-regulatory element of SHH and result in abnormal, ectopic SHH expression with pathological consequences (PubMed:12837695).</text>
</comment>
<comment type="disease" evidence="23 32">
    <disease id="DI-04241">
        <name>Hypoplasia or aplasia of tibia with polydactyly</name>
        <acronym>THYP</acronym>
        <description>An autosomal dominant disease characterized by hypoplastic or absent tibia, and polydactyly.</description>
        <dbReference type="MIM" id="188740"/>
    </disease>
    <text evidence="37 39">The gene represented in this entry is involved in disease pathogenesis. Mutations located in intron 5 of LMBR1 disrupt a long-range, cis-regulatory element of SHH and result in abnormal, ectopic SHH expression with pathological consequences.</text>
</comment>
<comment type="disease" evidence="29">
    <disease id="DI-04275">
        <name>Laurin-Sandrow syndrome</name>
        <acronym>LSS</acronym>
        <description>A rare autosomal dominant disorder characterized by polysyndactyly of hands and/or feet, mirror image duplication of the feet, nasal defects, and loss of identity between fibula and tibia. Some patients do not have nasal abnormalities (segmental Laurin-Sandrow syndrome).</description>
        <dbReference type="MIM" id="135750"/>
    </disease>
    <text>The gene represented in this entry is involved in disease pathogenesis. Abnormal SHH limb expression with pathological consequences is caused by duplications (16-75 kb) involving the ZPA regulatory sequence (ZRS), a SHH long-range cis-regulatory element, located in LMBR1 intron 5 (PubMed:24456159).</text>
</comment>
<comment type="similarity">
    <text evidence="41">Belongs to the hedgehog family.</text>
</comment>
<comment type="caution">
    <text evidence="30 40 43 44">The several steps and mechanisms that permit controlled Shh dispersion and gradient formation remain controversial. The ShhNC C-terminal domain displays an autoproteolysis activity and a cholesterol transferase activity resulting in the cleavage and covalent attachment of a cholesterol moiety to the C-terminal of the newly generated N-terminal fragment (ShhN). The protein is further modified by covalent addition of palmitate at the N-terminal of ShhN, resulting to the dual-lipidated Shh (ShhNp). ShhNp is firmly tethered to the cell membrane where it forms multimers. Further solubilization and release from the cell surface seem to be achieved through different mechanisms, including the interaction with DISP1 and SCUBE2, movement by lipoprotein particles, transport by cellular extensions called cytonemes or by proteolytic removal of both terminal lipidated peptides (PubMed:26875496). Once released, the fully processed Shh can signal within embryonic tissues both at short and long-range.</text>
</comment>
<comment type="online information" name="Atlas of Genetics and Cytogenetics in Oncology and Haematology">
    <link uri="https://atlasgeneticsoncology.org/gene/378/SHH"/>
</comment>
<evidence type="ECO:0000250" key="1">
    <source>
        <dbReference type="UniProtKB" id="Q02936"/>
    </source>
</evidence>
<evidence type="ECO:0000250" key="2">
    <source>
        <dbReference type="UniProtKB" id="Q62226"/>
    </source>
</evidence>
<evidence type="ECO:0000256" key="3">
    <source>
        <dbReference type="SAM" id="MobiDB-lite"/>
    </source>
</evidence>
<evidence type="ECO:0000269" key="4">
    <source>
    </source>
</evidence>
<evidence type="ECO:0000269" key="5">
    <source>
    </source>
</evidence>
<evidence type="ECO:0000269" key="6">
    <source>
    </source>
</evidence>
<evidence type="ECO:0000269" key="7">
    <source>
    </source>
</evidence>
<evidence type="ECO:0000269" key="8">
    <source>
    </source>
</evidence>
<evidence type="ECO:0000269" key="9">
    <source>
    </source>
</evidence>
<evidence type="ECO:0000269" key="10">
    <source>
    </source>
</evidence>
<evidence type="ECO:0000269" key="11">
    <source>
    </source>
</evidence>
<evidence type="ECO:0000269" key="12">
    <source>
    </source>
</evidence>
<evidence type="ECO:0000269" key="13">
    <source>
    </source>
</evidence>
<evidence type="ECO:0000269" key="14">
    <source>
    </source>
</evidence>
<evidence type="ECO:0000269" key="15">
    <source>
    </source>
</evidence>
<evidence type="ECO:0000269" key="16">
    <source>
    </source>
</evidence>
<evidence type="ECO:0000269" key="17">
    <source>
    </source>
</evidence>
<evidence type="ECO:0000269" key="18">
    <source>
    </source>
</evidence>
<evidence type="ECO:0000269" key="19">
    <source>
    </source>
</evidence>
<evidence type="ECO:0000269" key="20">
    <source>
    </source>
</evidence>
<evidence type="ECO:0000269" key="21">
    <source>
    </source>
</evidence>
<evidence type="ECO:0000269" key="22">
    <source>
    </source>
</evidence>
<evidence type="ECO:0000269" key="23">
    <source>
    </source>
</evidence>
<evidence type="ECO:0000269" key="24">
    <source>
    </source>
</evidence>
<evidence type="ECO:0000269" key="25">
    <source>
    </source>
</evidence>
<evidence type="ECO:0000269" key="26">
    <source>
    </source>
</evidence>
<evidence type="ECO:0000269" key="27">
    <source>
    </source>
</evidence>
<evidence type="ECO:0000269" key="28">
    <source>
    </source>
</evidence>
<evidence type="ECO:0000269" key="29">
    <source>
    </source>
</evidence>
<evidence type="ECO:0000269" key="30">
    <source>
    </source>
</evidence>
<evidence type="ECO:0000269" key="31">
    <source>
    </source>
</evidence>
<evidence type="ECO:0000269" key="32">
    <source>
    </source>
</evidence>
<evidence type="ECO:0000269" key="33">
    <source>
    </source>
</evidence>
<evidence type="ECO:0000269" key="34">
    <source>
    </source>
</evidence>
<evidence type="ECO:0000269" key="35">
    <source>
    </source>
</evidence>
<evidence type="ECO:0000269" key="36">
    <source>
    </source>
</evidence>
<evidence type="ECO:0000303" key="37">
    <source>
    </source>
</evidence>
<evidence type="ECO:0000303" key="38">
    <source>
    </source>
</evidence>
<evidence type="ECO:0000303" key="39">
    <source>
    </source>
</evidence>
<evidence type="ECO:0000303" key="40">
    <source>
    </source>
</evidence>
<evidence type="ECO:0000305" key="41"/>
<evidence type="ECO:0000305" key="42">
    <source>
    </source>
</evidence>
<evidence type="ECO:0000305" key="43">
    <source>
    </source>
</evidence>
<evidence type="ECO:0000305" key="44">
    <source>
    </source>
</evidence>
<evidence type="ECO:0000305" key="45">
    <source>
    </source>
</evidence>
<evidence type="ECO:0000305" key="46">
    <source>
    </source>
</evidence>
<evidence type="ECO:0000312" key="47">
    <source>
        <dbReference type="HGNC" id="HGNC:10848"/>
    </source>
</evidence>
<evidence type="ECO:0007744" key="48">
    <source>
        <dbReference type="PDB" id="3M1N"/>
    </source>
</evidence>
<evidence type="ECO:0007744" key="49">
    <source>
        <dbReference type="PDB" id="3MXW"/>
    </source>
</evidence>
<evidence type="ECO:0007829" key="50">
    <source>
        <dbReference type="PDB" id="3M1N"/>
    </source>
</evidence>
<evidence type="ECO:0007829" key="51">
    <source>
        <dbReference type="PDB" id="3MXW"/>
    </source>
</evidence>
<evidence type="ECO:0007829" key="52">
    <source>
        <dbReference type="PDB" id="6PJV"/>
    </source>
</evidence>
<dbReference type="EC" id="3.1.-.-" evidence="2"/>
<dbReference type="EMBL" id="L38518">
    <property type="protein sequence ID" value="AAA62179.1"/>
    <property type="molecule type" value="mRNA"/>
</dbReference>
<dbReference type="EMBL" id="AY422195">
    <property type="protein sequence ID" value="AAQ87879.1"/>
    <property type="molecule type" value="Genomic_DNA"/>
</dbReference>
<dbReference type="EMBL" id="AC002484">
    <property type="protein sequence ID" value="AAB67604.1"/>
    <property type="molecule type" value="Genomic_DNA"/>
</dbReference>
<dbReference type="EMBL" id="AC078834">
    <property type="protein sequence ID" value="AAS01990.1"/>
    <property type="molecule type" value="Genomic_DNA"/>
</dbReference>
<dbReference type="EMBL" id="CH236954">
    <property type="protein sequence ID" value="EAL23913.1"/>
    <property type="molecule type" value="Genomic_DNA"/>
</dbReference>
<dbReference type="CCDS" id="CCDS5942.1"/>
<dbReference type="RefSeq" id="NP_000184.1">
    <property type="nucleotide sequence ID" value="NM_000193.4"/>
</dbReference>
<dbReference type="PDB" id="3HO5">
    <property type="method" value="X-ray"/>
    <property type="resolution" value="3.01 A"/>
    <property type="chains" value="H=29-197"/>
</dbReference>
<dbReference type="PDB" id="3M1N">
    <property type="method" value="X-ray"/>
    <property type="resolution" value="1.85 A"/>
    <property type="chains" value="A/B=23-197"/>
</dbReference>
<dbReference type="PDB" id="3MXW">
    <property type="method" value="X-ray"/>
    <property type="resolution" value="1.83 A"/>
    <property type="chains" value="A=29-197"/>
</dbReference>
<dbReference type="PDB" id="6DMY">
    <property type="method" value="EM"/>
    <property type="resolution" value="3.60 A"/>
    <property type="chains" value="B=24-197"/>
</dbReference>
<dbReference type="PDB" id="6E1H">
    <property type="method" value="EM"/>
    <property type="resolution" value="3.50 A"/>
    <property type="chains" value="C=24-197"/>
</dbReference>
<dbReference type="PDB" id="6N7G">
    <property type="method" value="EM"/>
    <property type="resolution" value="6.80 A"/>
    <property type="chains" value="C/F=24-197"/>
</dbReference>
<dbReference type="PDB" id="6N7H">
    <property type="method" value="EM"/>
    <property type="resolution" value="3.60 A"/>
    <property type="chains" value="C=24-197"/>
</dbReference>
<dbReference type="PDB" id="6N7K">
    <property type="method" value="EM"/>
    <property type="resolution" value="6.50 A"/>
    <property type="chains" value="C/F=24-197"/>
</dbReference>
<dbReference type="PDB" id="6OEV">
    <property type="method" value="EM"/>
    <property type="resolution" value="3.80 A"/>
    <property type="chains" value="C=24-197"/>
</dbReference>
<dbReference type="PDB" id="6PJV">
    <property type="method" value="X-ray"/>
    <property type="resolution" value="1.43 A"/>
    <property type="chains" value="A=29-197"/>
</dbReference>
<dbReference type="PDB" id="6RMG">
    <property type="method" value="EM"/>
    <property type="resolution" value="3.40 A"/>
    <property type="chains" value="B=21-197"/>
</dbReference>
<dbReference type="PDB" id="6RVD">
    <property type="method" value="EM"/>
    <property type="resolution" value="3.50 A"/>
    <property type="chains" value="C=24-197"/>
</dbReference>
<dbReference type="PDB" id="7E2I">
    <property type="method" value="EM"/>
    <property type="resolution" value="4.07 A"/>
    <property type="chains" value="G=1-462"/>
</dbReference>
<dbReference type="PDB" id="7MHZ">
    <property type="method" value="EM"/>
    <property type="resolution" value="3.20 A"/>
    <property type="chains" value="B=24-31"/>
</dbReference>
<dbReference type="PDB" id="7RHQ">
    <property type="method" value="EM"/>
    <property type="resolution" value="3.53 A"/>
    <property type="chains" value="C=24-197"/>
</dbReference>
<dbReference type="PDB" id="7URF">
    <property type="method" value="EM"/>
    <property type="resolution" value="2.80 A"/>
    <property type="chains" value="B=24-30"/>
</dbReference>
<dbReference type="PDBsum" id="3HO5"/>
<dbReference type="PDBsum" id="3M1N"/>
<dbReference type="PDBsum" id="3MXW"/>
<dbReference type="PDBsum" id="6DMY"/>
<dbReference type="PDBsum" id="6E1H"/>
<dbReference type="PDBsum" id="6N7G"/>
<dbReference type="PDBsum" id="6N7H"/>
<dbReference type="PDBsum" id="6N7K"/>
<dbReference type="PDBsum" id="6OEV"/>
<dbReference type="PDBsum" id="6PJV"/>
<dbReference type="PDBsum" id="6RMG"/>
<dbReference type="PDBsum" id="6RVD"/>
<dbReference type="PDBsum" id="7E2I"/>
<dbReference type="PDBsum" id="7MHZ"/>
<dbReference type="PDBsum" id="7RHQ"/>
<dbReference type="PDBsum" id="7URF"/>
<dbReference type="EMDB" id="EMD-0355"/>
<dbReference type="EMDB" id="EMD-0356"/>
<dbReference type="EMDB" id="EMD-0358"/>
<dbReference type="EMDB" id="EMD-23837"/>
<dbReference type="EMDB" id="EMD-24466"/>
<dbReference type="EMDB" id="EMD-30958"/>
<dbReference type="EMDB" id="EMD-4936"/>
<dbReference type="EMDB" id="EMD-4939"/>
<dbReference type="EMDB" id="EMD-7796"/>
<dbReference type="EMDB" id="EMD-7968"/>
<dbReference type="EMDB" id="EMD-8955"/>
<dbReference type="SMR" id="Q15465"/>
<dbReference type="BioGRID" id="112365">
    <property type="interactions" value="17"/>
</dbReference>
<dbReference type="DIP" id="DIP-61763N"/>
<dbReference type="FunCoup" id="Q15465">
    <property type="interactions" value="306"/>
</dbReference>
<dbReference type="IntAct" id="Q15465">
    <property type="interactions" value="3"/>
</dbReference>
<dbReference type="STRING" id="9606.ENSP00000297261"/>
<dbReference type="BindingDB" id="Q15465"/>
<dbReference type="ChEMBL" id="CHEMBL5602"/>
<dbReference type="DrugCentral" id="Q15465"/>
<dbReference type="MEROPS" id="C46.002"/>
<dbReference type="GlyCosmos" id="Q15465">
    <property type="glycosylation" value="1 site, No reported glycans"/>
</dbReference>
<dbReference type="GlyGen" id="Q15465">
    <property type="glycosylation" value="1 site"/>
</dbReference>
<dbReference type="iPTMnet" id="Q15465"/>
<dbReference type="PhosphoSitePlus" id="Q15465"/>
<dbReference type="SwissPalm" id="Q15465"/>
<dbReference type="BioMuta" id="SHH"/>
<dbReference type="DMDM" id="6094283"/>
<dbReference type="jPOST" id="Q15465"/>
<dbReference type="MassIVE" id="Q15465"/>
<dbReference type="PaxDb" id="9606-ENSP00000297261"/>
<dbReference type="PeptideAtlas" id="Q15465"/>
<dbReference type="ABCD" id="Q15465">
    <property type="antibodies" value="17 sequenced antibodies"/>
</dbReference>
<dbReference type="Antibodypedia" id="4514">
    <property type="antibodies" value="646 antibodies from 42 providers"/>
</dbReference>
<dbReference type="DNASU" id="6469"/>
<dbReference type="Ensembl" id="ENST00000297261.7">
    <property type="protein sequence ID" value="ENSP00000297261.2"/>
    <property type="gene ID" value="ENSG00000164690.8"/>
</dbReference>
<dbReference type="GeneID" id="6469"/>
<dbReference type="KEGG" id="hsa:6469"/>
<dbReference type="MANE-Select" id="ENST00000297261.7">
    <property type="protein sequence ID" value="ENSP00000297261.2"/>
    <property type="RefSeq nucleotide sequence ID" value="NM_000193.4"/>
    <property type="RefSeq protein sequence ID" value="NP_000184.1"/>
</dbReference>
<dbReference type="UCSC" id="uc003wmk.2">
    <property type="organism name" value="human"/>
</dbReference>
<dbReference type="AGR" id="HGNC:10848"/>
<dbReference type="CTD" id="6469"/>
<dbReference type="DisGeNET" id="6469"/>
<dbReference type="GeneCards" id="SHH"/>
<dbReference type="GeneReviews" id="SHH"/>
<dbReference type="HGNC" id="HGNC:10848">
    <property type="gene designation" value="SHH"/>
</dbReference>
<dbReference type="HPA" id="ENSG00000164690">
    <property type="expression patterns" value="Tissue enhanced (adrenal gland, liver, stomach, urinary bladder)"/>
</dbReference>
<dbReference type="MalaCards" id="SHH"/>
<dbReference type="MIM" id="135750">
    <property type="type" value="phenotype"/>
</dbReference>
<dbReference type="MIM" id="142945">
    <property type="type" value="phenotype"/>
</dbReference>
<dbReference type="MIM" id="147250">
    <property type="type" value="phenotype"/>
</dbReference>
<dbReference type="MIM" id="174500">
    <property type="type" value="phenotype"/>
</dbReference>
<dbReference type="MIM" id="188740">
    <property type="type" value="phenotype"/>
</dbReference>
<dbReference type="MIM" id="190605">
    <property type="type" value="phenotype"/>
</dbReference>
<dbReference type="MIM" id="600725">
    <property type="type" value="gene"/>
</dbReference>
<dbReference type="MIM" id="611638">
    <property type="type" value="phenotype"/>
</dbReference>
<dbReference type="neXtProt" id="NX_Q15465"/>
<dbReference type="OpenTargets" id="ENSG00000164690"/>
<dbReference type="Orphanet" id="485275">
    <property type="disease" value="Acquired schizencephaly"/>
</dbReference>
<dbReference type="Orphanet" id="93925">
    <property type="disease" value="Alobar holoprosencephaly"/>
</dbReference>
<dbReference type="Orphanet" id="476119">
    <property type="disease" value="Autosomal dominant preaxial polydactyly-upperback hypertrichosis syndrome"/>
</dbReference>
<dbReference type="Orphanet" id="98938">
    <property type="disease" value="Colobomatous microphthalmia"/>
</dbReference>
<dbReference type="Orphanet" id="93321">
    <property type="disease" value="Isolated radial hemimelia"/>
</dbReference>
<dbReference type="Orphanet" id="93924">
    <property type="disease" value="Lobar holoprosencephaly"/>
</dbReference>
<dbReference type="Orphanet" id="280200">
    <property type="disease" value="Microform holoprosencephaly"/>
</dbReference>
<dbReference type="Orphanet" id="93926">
    <property type="disease" value="Midline interhemispheric variant of holoprosencephaly"/>
</dbReference>
<dbReference type="Orphanet" id="93336">
    <property type="disease" value="Polydactyly of a triphalangeal thumb"/>
</dbReference>
<dbReference type="Orphanet" id="220386">
    <property type="disease" value="Semilobar holoprosencephaly"/>
</dbReference>
<dbReference type="Orphanet" id="280195">
    <property type="disease" value="Septopreoptic holoprosencephaly"/>
</dbReference>
<dbReference type="Orphanet" id="93405">
    <property type="disease" value="Syndactyly type 4"/>
</dbReference>
<dbReference type="Orphanet" id="988">
    <property type="disease" value="Tibial hemimelia-polysyndactyly-triphalangeal thumb syndrome"/>
</dbReference>
<dbReference type="PharmGKB" id="PA35752"/>
<dbReference type="VEuPathDB" id="HostDB:ENSG00000164690"/>
<dbReference type="eggNOG" id="KOG3638">
    <property type="taxonomic scope" value="Eukaryota"/>
</dbReference>
<dbReference type="GeneTree" id="ENSGT00940000159119"/>
<dbReference type="HOGENOM" id="CLU_034686_0_0_1"/>
<dbReference type="InParanoid" id="Q15465"/>
<dbReference type="OMA" id="HWVSSLL"/>
<dbReference type="OrthoDB" id="5212at2759"/>
<dbReference type="PAN-GO" id="Q15465">
    <property type="GO annotations" value="7 GO annotations based on evolutionary models"/>
</dbReference>
<dbReference type="PhylomeDB" id="Q15465"/>
<dbReference type="TreeFam" id="TF106458"/>
<dbReference type="PathwayCommons" id="Q15465"/>
<dbReference type="Reactome" id="R-HSA-373080">
    <property type="pathway name" value="Class B/2 (Secretin family receptors)"/>
</dbReference>
<dbReference type="Reactome" id="R-HSA-5358346">
    <property type="pathway name" value="Hedgehog ligand biogenesis"/>
</dbReference>
<dbReference type="Reactome" id="R-HSA-5362768">
    <property type="pathway name" value="Hh mutants are degraded by ERAD"/>
</dbReference>
<dbReference type="Reactome" id="R-HSA-5362798">
    <property type="pathway name" value="Release of Hh-Np from the secreting cell"/>
</dbReference>
<dbReference type="Reactome" id="R-HSA-5632681">
    <property type="pathway name" value="Ligand-receptor interactions"/>
</dbReference>
<dbReference type="Reactome" id="R-HSA-5632684">
    <property type="pathway name" value="Hedgehog 'on' state"/>
</dbReference>
<dbReference type="Reactome" id="R-HSA-5635838">
    <property type="pathway name" value="Activation of SMO"/>
</dbReference>
<dbReference type="Reactome" id="R-HSA-5658034">
    <property type="pathway name" value="HHAT G278V doesn't palmitoylate Hh-Np"/>
</dbReference>
<dbReference type="Reactome" id="R-HSA-9758920">
    <property type="pathway name" value="Formation of lateral plate mesoderm"/>
</dbReference>
<dbReference type="Reactome" id="R-HSA-9796292">
    <property type="pathway name" value="Formation of axial mesoderm"/>
</dbReference>
<dbReference type="Reactome" id="R-HSA-9925561">
    <property type="pathway name" value="Developmental Lineage of Pancreatic Acinar Cells"/>
</dbReference>
<dbReference type="SignaLink" id="Q15465"/>
<dbReference type="SIGNOR" id="Q15465"/>
<dbReference type="BioGRID-ORCS" id="6469">
    <property type="hits" value="12 hits in 1151 CRISPR screens"/>
</dbReference>
<dbReference type="ChiTaRS" id="SHH">
    <property type="organism name" value="human"/>
</dbReference>
<dbReference type="EvolutionaryTrace" id="Q15465"/>
<dbReference type="GeneWiki" id="Sonic_hedgehog"/>
<dbReference type="GenomeRNAi" id="6469"/>
<dbReference type="Pharos" id="Q15465">
    <property type="development level" value="Tchem"/>
</dbReference>
<dbReference type="PRO" id="PR:Q15465"/>
<dbReference type="Proteomes" id="UP000005640">
    <property type="component" value="Chromosome 7"/>
</dbReference>
<dbReference type="RNAct" id="Q15465">
    <property type="molecule type" value="protein"/>
</dbReference>
<dbReference type="Bgee" id="ENSG00000164690">
    <property type="expression patterns" value="Expressed in right lobe of liver and 98 other cell types or tissues"/>
</dbReference>
<dbReference type="ExpressionAtlas" id="Q15465">
    <property type="expression patterns" value="baseline and differential"/>
</dbReference>
<dbReference type="GO" id="GO:0009986">
    <property type="term" value="C:cell surface"/>
    <property type="evidence" value="ECO:0000250"/>
    <property type="project" value="UniProtKB"/>
</dbReference>
<dbReference type="GO" id="GO:0062023">
    <property type="term" value="C:collagen-containing extracellular matrix"/>
    <property type="evidence" value="ECO:0007005"/>
    <property type="project" value="BHF-UCL"/>
</dbReference>
<dbReference type="GO" id="GO:0005829">
    <property type="term" value="C:cytosol"/>
    <property type="evidence" value="ECO:0000304"/>
    <property type="project" value="Reactome"/>
</dbReference>
<dbReference type="GO" id="GO:0005783">
    <property type="term" value="C:endoplasmic reticulum"/>
    <property type="evidence" value="ECO:0000314"/>
    <property type="project" value="UniProtKB"/>
</dbReference>
<dbReference type="GO" id="GO:0005788">
    <property type="term" value="C:endoplasmic reticulum lumen"/>
    <property type="evidence" value="ECO:0000304"/>
    <property type="project" value="Reactome"/>
</dbReference>
<dbReference type="GO" id="GO:0005789">
    <property type="term" value="C:endoplasmic reticulum membrane"/>
    <property type="evidence" value="ECO:0007669"/>
    <property type="project" value="UniProtKB-SubCell"/>
</dbReference>
<dbReference type="GO" id="GO:0005576">
    <property type="term" value="C:extracellular region"/>
    <property type="evidence" value="ECO:0000304"/>
    <property type="project" value="Reactome"/>
</dbReference>
<dbReference type="GO" id="GO:0005615">
    <property type="term" value="C:extracellular space"/>
    <property type="evidence" value="ECO:0000314"/>
    <property type="project" value="UniProtKB"/>
</dbReference>
<dbReference type="GO" id="GO:0005794">
    <property type="term" value="C:Golgi apparatus"/>
    <property type="evidence" value="ECO:0000314"/>
    <property type="project" value="UniProtKB"/>
</dbReference>
<dbReference type="GO" id="GO:0000139">
    <property type="term" value="C:Golgi membrane"/>
    <property type="evidence" value="ECO:0007669"/>
    <property type="project" value="UniProtKB-SubCell"/>
</dbReference>
<dbReference type="GO" id="GO:0045121">
    <property type="term" value="C:membrane raft"/>
    <property type="evidence" value="ECO:0000250"/>
    <property type="project" value="UniProtKB"/>
</dbReference>
<dbReference type="GO" id="GO:0005886">
    <property type="term" value="C:plasma membrane"/>
    <property type="evidence" value="ECO:0000304"/>
    <property type="project" value="Reactome"/>
</dbReference>
<dbReference type="GO" id="GO:0005509">
    <property type="term" value="F:calcium ion binding"/>
    <property type="evidence" value="ECO:0000314"/>
    <property type="project" value="UniProtKB"/>
</dbReference>
<dbReference type="GO" id="GO:0140853">
    <property type="term" value="F:cholesterol-protein transferase activity"/>
    <property type="evidence" value="ECO:0000250"/>
    <property type="project" value="UniProtKB"/>
</dbReference>
<dbReference type="GO" id="GO:0004175">
    <property type="term" value="F:endopeptidase activity"/>
    <property type="evidence" value="ECO:0000304"/>
    <property type="project" value="Reactome"/>
</dbReference>
<dbReference type="GO" id="GO:0005539">
    <property type="term" value="F:glycosaminoglycan binding"/>
    <property type="evidence" value="ECO:0007669"/>
    <property type="project" value="Ensembl"/>
</dbReference>
<dbReference type="GO" id="GO:0043237">
    <property type="term" value="F:laminin-1 binding"/>
    <property type="evidence" value="ECO:0000250"/>
    <property type="project" value="UniProtKB"/>
</dbReference>
<dbReference type="GO" id="GO:0016015">
    <property type="term" value="F:morphogen activity"/>
    <property type="evidence" value="ECO:0000304"/>
    <property type="project" value="ParkinsonsUK-UCL"/>
</dbReference>
<dbReference type="GO" id="GO:0005113">
    <property type="term" value="F:patched binding"/>
    <property type="evidence" value="ECO:0000314"/>
    <property type="project" value="UniProtKB"/>
</dbReference>
<dbReference type="GO" id="GO:0008233">
    <property type="term" value="F:peptidase activity"/>
    <property type="evidence" value="ECO:0000250"/>
    <property type="project" value="UniProtKB"/>
</dbReference>
<dbReference type="GO" id="GO:0008270">
    <property type="term" value="F:zinc ion binding"/>
    <property type="evidence" value="ECO:0000314"/>
    <property type="project" value="UniProtKB"/>
</dbReference>
<dbReference type="GO" id="GO:0046632">
    <property type="term" value="P:alpha-beta T cell differentiation"/>
    <property type="evidence" value="ECO:0007669"/>
    <property type="project" value="Ensembl"/>
</dbReference>
<dbReference type="GO" id="GO:0008209">
    <property type="term" value="P:androgen metabolic process"/>
    <property type="evidence" value="ECO:0000250"/>
    <property type="project" value="UniProtKB"/>
</dbReference>
<dbReference type="GO" id="GO:0048645">
    <property type="term" value="P:animal organ formation"/>
    <property type="evidence" value="ECO:0007669"/>
    <property type="project" value="Ensembl"/>
</dbReference>
<dbReference type="GO" id="GO:0097190">
    <property type="term" value="P:apoptotic signaling pathway"/>
    <property type="evidence" value="ECO:0000250"/>
    <property type="project" value="UniProtKB"/>
</dbReference>
<dbReference type="GO" id="GO:0060840">
    <property type="term" value="P:artery development"/>
    <property type="evidence" value="ECO:0007669"/>
    <property type="project" value="Ensembl"/>
</dbReference>
<dbReference type="GO" id="GO:0007411">
    <property type="term" value="P:axon guidance"/>
    <property type="evidence" value="ECO:0000250"/>
    <property type="project" value="UniProtKB"/>
</dbReference>
<dbReference type="GO" id="GO:0060020">
    <property type="term" value="P:Bergmann glial cell differentiation"/>
    <property type="evidence" value="ECO:0007669"/>
    <property type="project" value="Ensembl"/>
</dbReference>
<dbReference type="GO" id="GO:0007596">
    <property type="term" value="P:blood coagulation"/>
    <property type="evidence" value="ECO:0007669"/>
    <property type="project" value="Ensembl"/>
</dbReference>
<dbReference type="GO" id="GO:0001569">
    <property type="term" value="P:branching involved in blood vessel morphogenesis"/>
    <property type="evidence" value="ECO:0000250"/>
    <property type="project" value="UniProtKB"/>
</dbReference>
<dbReference type="GO" id="GO:0060445">
    <property type="term" value="P:branching involved in salivary gland morphogenesis"/>
    <property type="evidence" value="ECO:0007669"/>
    <property type="project" value="Ensembl"/>
</dbReference>
<dbReference type="GO" id="GO:0001658">
    <property type="term" value="P:branching involved in ureteric bud morphogenesis"/>
    <property type="evidence" value="ECO:0000250"/>
    <property type="project" value="UniProtKB"/>
</dbReference>
<dbReference type="GO" id="GO:0048754">
    <property type="term" value="P:branching morphogenesis of an epithelial tube"/>
    <property type="evidence" value="ECO:0000250"/>
    <property type="project" value="UniProtKB"/>
</dbReference>
<dbReference type="GO" id="GO:0060447">
    <property type="term" value="P:bud outgrowth involved in lung branching"/>
    <property type="evidence" value="ECO:0007669"/>
    <property type="project" value="Ensembl"/>
</dbReference>
<dbReference type="GO" id="GO:0043010">
    <property type="term" value="P:camera-type eye development"/>
    <property type="evidence" value="ECO:0007669"/>
    <property type="project" value="Ensembl"/>
</dbReference>
<dbReference type="GO" id="GO:0060070">
    <property type="term" value="P:canonical Wnt signaling pathway"/>
    <property type="evidence" value="ECO:0007669"/>
    <property type="project" value="Ensembl"/>
</dbReference>
<dbReference type="GO" id="GO:0043369">
    <property type="term" value="P:CD4-positive or CD8-positive, alpha-beta T cell lineage commitment"/>
    <property type="evidence" value="ECO:0000314"/>
    <property type="project" value="BHF-UCL"/>
</dbReference>
<dbReference type="GO" id="GO:0048468">
    <property type="term" value="P:cell development"/>
    <property type="evidence" value="ECO:0000250"/>
    <property type="project" value="UniProtKB"/>
</dbReference>
<dbReference type="GO" id="GO:0001708">
    <property type="term" value="P:cell fate specification"/>
    <property type="evidence" value="ECO:0000250"/>
    <property type="project" value="UniProtKB"/>
</dbReference>
<dbReference type="GO" id="GO:0007267">
    <property type="term" value="P:cell-cell signaling"/>
    <property type="evidence" value="ECO:0000250"/>
    <property type="project" value="UniProtKB"/>
</dbReference>
<dbReference type="GO" id="GO:0071285">
    <property type="term" value="P:cellular response to lithium ion"/>
    <property type="evidence" value="ECO:0007669"/>
    <property type="project" value="Ensembl"/>
</dbReference>
<dbReference type="GO" id="GO:0007417">
    <property type="term" value="P:central nervous system development"/>
    <property type="evidence" value="ECO:0000250"/>
    <property type="project" value="UniProtKB"/>
</dbReference>
<dbReference type="GO" id="GO:0021930">
    <property type="term" value="P:cerebellar granule cell precursor proliferation"/>
    <property type="evidence" value="ECO:0000250"/>
    <property type="project" value="UniProtKB"/>
</dbReference>
<dbReference type="GO" id="GO:0003140">
    <property type="term" value="P:determination of left/right asymmetry in lateral mesoderm"/>
    <property type="evidence" value="ECO:0000250"/>
    <property type="project" value="BHF-UCL"/>
</dbReference>
<dbReference type="GO" id="GO:0071542">
    <property type="term" value="P:dopaminergic neuron differentiation"/>
    <property type="evidence" value="ECO:0000304"/>
    <property type="project" value="ParkinsonsUK-UCL"/>
</dbReference>
<dbReference type="GO" id="GO:0021904">
    <property type="term" value="P:dorsal/ventral neural tube patterning"/>
    <property type="evidence" value="ECO:0007669"/>
    <property type="project" value="Ensembl"/>
</dbReference>
<dbReference type="GO" id="GO:0009953">
    <property type="term" value="P:dorsal/ventral pattern formation"/>
    <property type="evidence" value="ECO:0000250"/>
    <property type="project" value="UniProtKB"/>
</dbReference>
<dbReference type="GO" id="GO:0007398">
    <property type="term" value="P:ectoderm development"/>
    <property type="evidence" value="ECO:0007669"/>
    <property type="project" value="Ensembl"/>
</dbReference>
<dbReference type="GO" id="GO:0048557">
    <property type="term" value="P:embryonic digestive tract morphogenesis"/>
    <property type="evidence" value="ECO:0007669"/>
    <property type="project" value="Ensembl"/>
</dbReference>
<dbReference type="GO" id="GO:0042733">
    <property type="term" value="P:embryonic digit morphogenesis"/>
    <property type="evidence" value="ECO:0000250"/>
    <property type="project" value="UniProtKB"/>
</dbReference>
<dbReference type="GO" id="GO:0048617">
    <property type="term" value="P:embryonic foregut morphogenesis"/>
    <property type="evidence" value="ECO:0007669"/>
    <property type="project" value="Ensembl"/>
</dbReference>
<dbReference type="GO" id="GO:0035115">
    <property type="term" value="P:embryonic forelimb morphogenesis"/>
    <property type="evidence" value="ECO:0007669"/>
    <property type="project" value="Ensembl"/>
</dbReference>
<dbReference type="GO" id="GO:0035116">
    <property type="term" value="P:embryonic hindlimb morphogenesis"/>
    <property type="evidence" value="ECO:0007669"/>
    <property type="project" value="Ensembl"/>
</dbReference>
<dbReference type="GO" id="GO:0030326">
    <property type="term" value="P:embryonic limb morphogenesis"/>
    <property type="evidence" value="ECO:0000250"/>
    <property type="project" value="UniProtKB"/>
</dbReference>
<dbReference type="GO" id="GO:0009880">
    <property type="term" value="P:embryonic pattern specification"/>
    <property type="evidence" value="ECO:0000304"/>
    <property type="project" value="BHF-UCL"/>
</dbReference>
<dbReference type="GO" id="GO:0048706">
    <property type="term" value="P:embryonic skeletal system development"/>
    <property type="evidence" value="ECO:0007669"/>
    <property type="project" value="Ensembl"/>
</dbReference>
<dbReference type="GO" id="GO:0006897">
    <property type="term" value="P:endocytosis"/>
    <property type="evidence" value="ECO:0007669"/>
    <property type="project" value="Ensembl"/>
</dbReference>
<dbReference type="GO" id="GO:0060767">
    <property type="term" value="P:epithelial cell proliferation involved in prostate gland development"/>
    <property type="evidence" value="ECO:0007669"/>
    <property type="project" value="Ensembl"/>
</dbReference>
<dbReference type="GO" id="GO:0060664">
    <property type="term" value="P:epithelial cell proliferation involved in salivary gland morphogenesis"/>
    <property type="evidence" value="ECO:0007669"/>
    <property type="project" value="Ensembl"/>
</dbReference>
<dbReference type="GO" id="GO:0060684">
    <property type="term" value="P:epithelial-mesenchymal cell signaling"/>
    <property type="evidence" value="ECO:0000314"/>
    <property type="project" value="MGI"/>
</dbReference>
<dbReference type="GO" id="GO:0090162">
    <property type="term" value="P:establishment of epithelial cell polarity"/>
    <property type="evidence" value="ECO:0007669"/>
    <property type="project" value="Ensembl"/>
</dbReference>
<dbReference type="GO" id="GO:0030900">
    <property type="term" value="P:forebrain development"/>
    <property type="evidence" value="ECO:0000250"/>
    <property type="project" value="UniProtKB"/>
</dbReference>
<dbReference type="GO" id="GO:0048859">
    <property type="term" value="P:formation of anatomical boundary"/>
    <property type="evidence" value="ECO:0007669"/>
    <property type="project" value="Ensembl"/>
</dbReference>
<dbReference type="GO" id="GO:0031069">
    <property type="term" value="P:hair follicle morphogenesis"/>
    <property type="evidence" value="ECO:0007669"/>
    <property type="project" value="Ensembl"/>
</dbReference>
<dbReference type="GO" id="GO:0007507">
    <property type="term" value="P:heart development"/>
    <property type="evidence" value="ECO:0000250"/>
    <property type="project" value="UniProtKB"/>
</dbReference>
<dbReference type="GO" id="GO:0001947">
    <property type="term" value="P:heart looping"/>
    <property type="evidence" value="ECO:0000250"/>
    <property type="project" value="BHF-UCL"/>
</dbReference>
<dbReference type="GO" id="GO:0030902">
    <property type="term" value="P:hindbrain development"/>
    <property type="evidence" value="ECO:0000250"/>
    <property type="project" value="UniProtKB"/>
</dbReference>
<dbReference type="GO" id="GO:0007442">
    <property type="term" value="P:hindgut morphogenesis"/>
    <property type="evidence" value="ECO:0007669"/>
    <property type="project" value="Ensembl"/>
</dbReference>
<dbReference type="GO" id="GO:0048839">
    <property type="term" value="P:inner ear development"/>
    <property type="evidence" value="ECO:0007669"/>
    <property type="project" value="Ensembl"/>
</dbReference>
<dbReference type="GO" id="GO:0016539">
    <property type="term" value="P:intein-mediated protein splicing"/>
    <property type="evidence" value="ECO:0007669"/>
    <property type="project" value="InterPro"/>
</dbReference>
<dbReference type="GO" id="GO:0045109">
    <property type="term" value="P:intermediate filament organization"/>
    <property type="evidence" value="ECO:0007669"/>
    <property type="project" value="Ensembl"/>
</dbReference>
<dbReference type="GO" id="GO:0060459">
    <property type="term" value="P:left lung development"/>
    <property type="evidence" value="ECO:0007669"/>
    <property type="project" value="Ensembl"/>
</dbReference>
<dbReference type="GO" id="GO:0060174">
    <property type="term" value="P:limb bud formation"/>
    <property type="evidence" value="ECO:0007669"/>
    <property type="project" value="Ensembl"/>
</dbReference>
<dbReference type="GO" id="GO:0030324">
    <property type="term" value="P:lung development"/>
    <property type="evidence" value="ECO:0000250"/>
    <property type="project" value="UniProtKB"/>
</dbReference>
<dbReference type="GO" id="GO:0060428">
    <property type="term" value="P:lung epithelium development"/>
    <property type="evidence" value="ECO:0007669"/>
    <property type="project" value="Ensembl"/>
</dbReference>
<dbReference type="GO" id="GO:0060463">
    <property type="term" value="P:lung lobe morphogenesis"/>
    <property type="evidence" value="ECO:0007669"/>
    <property type="project" value="Ensembl"/>
</dbReference>
<dbReference type="GO" id="GO:0060484">
    <property type="term" value="P:lung-associated mesenchyme development"/>
    <property type="evidence" value="ECO:0007669"/>
    <property type="project" value="Ensembl"/>
</dbReference>
<dbReference type="GO" id="GO:0002320">
    <property type="term" value="P:lymphoid progenitor cell differentiation"/>
    <property type="evidence" value="ECO:0000315"/>
    <property type="project" value="BHF-UCL"/>
</dbReference>
<dbReference type="GO" id="GO:0030539">
    <property type="term" value="P:male genitalia development"/>
    <property type="evidence" value="ECO:0000250"/>
    <property type="project" value="UniProtKB"/>
</dbReference>
<dbReference type="GO" id="GO:0097152">
    <property type="term" value="P:mesenchymal cell apoptotic process"/>
    <property type="evidence" value="ECO:0007669"/>
    <property type="project" value="Ensembl"/>
</dbReference>
<dbReference type="GO" id="GO:0060916">
    <property type="term" value="P:mesenchymal cell proliferation involved in lung development"/>
    <property type="evidence" value="ECO:0007669"/>
    <property type="project" value="Ensembl"/>
</dbReference>
<dbReference type="GO" id="GO:0060783">
    <property type="term" value="P:mesenchymal smoothened signaling pathway involved in prostate gland development"/>
    <property type="evidence" value="ECO:0007669"/>
    <property type="project" value="Ensembl"/>
</dbReference>
<dbReference type="GO" id="GO:0072205">
    <property type="term" value="P:metanephric collecting duct development"/>
    <property type="evidence" value="ECO:0000270"/>
    <property type="project" value="UniProtKB"/>
</dbReference>
<dbReference type="GO" id="GO:0072136">
    <property type="term" value="P:metanephric mesenchymal cell proliferation involved in metanephros development"/>
    <property type="evidence" value="ECO:0000250"/>
    <property type="project" value="UniProtKB"/>
</dbReference>
<dbReference type="GO" id="GO:0001656">
    <property type="term" value="P:metanephros development"/>
    <property type="evidence" value="ECO:0000250"/>
    <property type="project" value="UniProtKB"/>
</dbReference>
<dbReference type="GO" id="GO:0030901">
    <property type="term" value="P:midbrain development"/>
    <property type="evidence" value="ECO:0000250"/>
    <property type="project" value="UniProtKB"/>
</dbReference>
<dbReference type="GO" id="GO:0045445">
    <property type="term" value="P:myoblast differentiation"/>
    <property type="evidence" value="ECO:0007669"/>
    <property type="project" value="Ensembl"/>
</dbReference>
<dbReference type="GO" id="GO:0046639">
    <property type="term" value="P:negative regulation of alpha-beta T cell differentiation"/>
    <property type="evidence" value="ECO:0007669"/>
    <property type="project" value="Ensembl"/>
</dbReference>
<dbReference type="GO" id="GO:0043066">
    <property type="term" value="P:negative regulation of apoptotic process"/>
    <property type="evidence" value="ECO:0000250"/>
    <property type="project" value="UniProtKB"/>
</dbReference>
<dbReference type="GO" id="GO:0090090">
    <property type="term" value="P:negative regulation of canonical Wnt signaling pathway"/>
    <property type="evidence" value="ECO:0007669"/>
    <property type="project" value="Ensembl"/>
</dbReference>
<dbReference type="GO" id="GO:0045596">
    <property type="term" value="P:negative regulation of cell differentiation"/>
    <property type="evidence" value="ECO:0000250"/>
    <property type="project" value="UniProtKB"/>
</dbReference>
<dbReference type="GO" id="GO:0030336">
    <property type="term" value="P:negative regulation of cell migration"/>
    <property type="evidence" value="ECO:0000250"/>
    <property type="project" value="UniProtKB"/>
</dbReference>
<dbReference type="GO" id="GO:0090370">
    <property type="term" value="P:negative regulation of cholesterol efflux"/>
    <property type="evidence" value="ECO:0000250"/>
    <property type="project" value="BHF-UCL"/>
</dbReference>
<dbReference type="GO" id="GO:1904339">
    <property type="term" value="P:negative regulation of dopaminergic neuron differentiation"/>
    <property type="evidence" value="ECO:0007669"/>
    <property type="project" value="Ensembl"/>
</dbReference>
<dbReference type="GO" id="GO:0010629">
    <property type="term" value="P:negative regulation of gene expression"/>
    <property type="evidence" value="ECO:0007669"/>
    <property type="project" value="Ensembl"/>
</dbReference>
<dbReference type="GO" id="GO:2000357">
    <property type="term" value="P:negative regulation of kidney smooth muscle cell differentiation"/>
    <property type="evidence" value="ECO:0000250"/>
    <property type="project" value="UniProtKB"/>
</dbReference>
<dbReference type="GO" id="GO:2001054">
    <property type="term" value="P:negative regulation of mesenchymal cell apoptotic process"/>
    <property type="evidence" value="ECO:0007669"/>
    <property type="project" value="Ensembl"/>
</dbReference>
<dbReference type="GO" id="GO:0032435">
    <property type="term" value="P:negative regulation of proteasomal ubiquitin-dependent protein catabolic process"/>
    <property type="evidence" value="ECO:0007669"/>
    <property type="project" value="Ensembl"/>
</dbReference>
<dbReference type="GO" id="GO:0033085">
    <property type="term" value="P:negative regulation of T cell differentiation in thymus"/>
    <property type="evidence" value="ECO:0007669"/>
    <property type="project" value="Ensembl"/>
</dbReference>
<dbReference type="GO" id="GO:0042130">
    <property type="term" value="P:negative regulation of T cell proliferation"/>
    <property type="evidence" value="ECO:0007669"/>
    <property type="project" value="Ensembl"/>
</dbReference>
<dbReference type="GO" id="GO:0000122">
    <property type="term" value="P:negative regulation of transcription by RNA polymerase II"/>
    <property type="evidence" value="ECO:0000250"/>
    <property type="project" value="BHF-UCL"/>
</dbReference>
<dbReference type="GO" id="GO:0034244">
    <property type="term" value="P:negative regulation of transcription elongation by RNA polymerase II"/>
    <property type="evidence" value="ECO:0007669"/>
    <property type="project" value="Ensembl"/>
</dbReference>
<dbReference type="GO" id="GO:2000062">
    <property type="term" value="P:negative regulation of ureter smooth muscle cell differentiation"/>
    <property type="evidence" value="ECO:0000250"/>
    <property type="project" value="UniProtKB"/>
</dbReference>
<dbReference type="GO" id="GO:0045060">
    <property type="term" value="P:negative thymic T cell selection"/>
    <property type="evidence" value="ECO:0000250"/>
    <property type="project" value="UniProtKB"/>
</dbReference>
<dbReference type="GO" id="GO:0001755">
    <property type="term" value="P:neural crest cell migration"/>
    <property type="evidence" value="ECO:0000250"/>
    <property type="project" value="UniProtKB"/>
</dbReference>
<dbReference type="GO" id="GO:0007405">
    <property type="term" value="P:neuroblast proliferation"/>
    <property type="evidence" value="ECO:0000250"/>
    <property type="project" value="UniProtKB"/>
</dbReference>
<dbReference type="GO" id="GO:0048663">
    <property type="term" value="P:neuron fate commitment"/>
    <property type="evidence" value="ECO:0000250"/>
    <property type="project" value="UniProtKB"/>
</dbReference>
<dbReference type="GO" id="GO:0042475">
    <property type="term" value="P:odontogenesis of dentin-containing tooth"/>
    <property type="evidence" value="ECO:0007669"/>
    <property type="project" value="Ensembl"/>
</dbReference>
<dbReference type="GO" id="GO:0014003">
    <property type="term" value="P:oligodendrocyte development"/>
    <property type="evidence" value="ECO:0007669"/>
    <property type="project" value="Ensembl"/>
</dbReference>
<dbReference type="GO" id="GO:0048709">
    <property type="term" value="P:oligodendrocyte differentiation"/>
    <property type="evidence" value="ECO:0000318"/>
    <property type="project" value="GO_Central"/>
</dbReference>
<dbReference type="GO" id="GO:0002076">
    <property type="term" value="P:osteoblast development"/>
    <property type="evidence" value="ECO:0007669"/>
    <property type="project" value="Ensembl"/>
</dbReference>
<dbReference type="GO" id="GO:0031016">
    <property type="term" value="P:pancreas development"/>
    <property type="evidence" value="ECO:0007669"/>
    <property type="project" value="Ensembl"/>
</dbReference>
<dbReference type="GO" id="GO:0007389">
    <property type="term" value="P:pattern specification process"/>
    <property type="evidence" value="ECO:0000250"/>
    <property type="project" value="UniProtKB"/>
</dbReference>
<dbReference type="GO" id="GO:0009949">
    <property type="term" value="P:polarity specification of anterior/posterior axis"/>
    <property type="evidence" value="ECO:0000250"/>
    <property type="project" value="UniProtKB"/>
</dbReference>
<dbReference type="GO" id="GO:0046638">
    <property type="term" value="P:positive regulation of alpha-beta T cell differentiation"/>
    <property type="evidence" value="ECO:0000250"/>
    <property type="project" value="UniProtKB"/>
</dbReference>
<dbReference type="GO" id="GO:0048711">
    <property type="term" value="P:positive regulation of astrocyte differentiation"/>
    <property type="evidence" value="ECO:0007669"/>
    <property type="project" value="Ensembl"/>
</dbReference>
<dbReference type="GO" id="GO:0051781">
    <property type="term" value="P:positive regulation of cell division"/>
    <property type="evidence" value="ECO:0000314"/>
    <property type="project" value="BHF-UCL"/>
</dbReference>
<dbReference type="GO" id="GO:0008284">
    <property type="term" value="P:positive regulation of cell population proliferation"/>
    <property type="evidence" value="ECO:0000314"/>
    <property type="project" value="BHF-UCL"/>
</dbReference>
<dbReference type="GO" id="GO:0021940">
    <property type="term" value="P:positive regulation of cerebellar granule cell precursor proliferation"/>
    <property type="evidence" value="ECO:0007669"/>
    <property type="project" value="Ensembl"/>
</dbReference>
<dbReference type="GO" id="GO:0045893">
    <property type="term" value="P:positive regulation of DNA-templated transcription"/>
    <property type="evidence" value="ECO:0000314"/>
    <property type="project" value="BHF-UCL"/>
</dbReference>
<dbReference type="GO" id="GO:0060769">
    <property type="term" value="P:positive regulation of epithelial cell proliferation involved in prostate gland development"/>
    <property type="evidence" value="ECO:0007669"/>
    <property type="project" value="Ensembl"/>
</dbReference>
<dbReference type="GO" id="GO:0010628">
    <property type="term" value="P:positive regulation of gene expression"/>
    <property type="evidence" value="ECO:0007669"/>
    <property type="project" value="Ensembl"/>
</dbReference>
<dbReference type="GO" id="GO:0033092">
    <property type="term" value="P:positive regulation of immature T cell proliferation in thymus"/>
    <property type="evidence" value="ECO:0000250"/>
    <property type="project" value="BHF-UCL"/>
</dbReference>
<dbReference type="GO" id="GO:2000358">
    <property type="term" value="P:positive regulation of kidney smooth muscle cell differentiation"/>
    <property type="evidence" value="ECO:0000250"/>
    <property type="project" value="UniProtKB"/>
</dbReference>
<dbReference type="GO" id="GO:2000729">
    <property type="term" value="P:positive regulation of mesenchymal cell proliferation involved in ureter development"/>
    <property type="evidence" value="ECO:0000250"/>
    <property type="project" value="UniProtKB"/>
</dbReference>
<dbReference type="GO" id="GO:0002052">
    <property type="term" value="P:positive regulation of neuroblast proliferation"/>
    <property type="evidence" value="ECO:0007669"/>
    <property type="project" value="Ensembl"/>
</dbReference>
<dbReference type="GO" id="GO:0048714">
    <property type="term" value="P:positive regulation of oligodendrocyte differentiation"/>
    <property type="evidence" value="ECO:0007669"/>
    <property type="project" value="Ensembl"/>
</dbReference>
<dbReference type="GO" id="GO:0042307">
    <property type="term" value="P:positive regulation of protein import into nucleus"/>
    <property type="evidence" value="ECO:0007669"/>
    <property type="project" value="Ensembl"/>
</dbReference>
<dbReference type="GO" id="GO:0061189">
    <property type="term" value="P:positive regulation of sclerotome development"/>
    <property type="evidence" value="ECO:0000314"/>
    <property type="project" value="BHF-UCL"/>
</dbReference>
<dbReference type="GO" id="GO:0014858">
    <property type="term" value="P:positive regulation of skeletal muscle cell proliferation"/>
    <property type="evidence" value="ECO:0007669"/>
    <property type="project" value="Ensembl"/>
</dbReference>
<dbReference type="GO" id="GO:0048643">
    <property type="term" value="P:positive regulation of skeletal muscle tissue development"/>
    <property type="evidence" value="ECO:0007669"/>
    <property type="project" value="Ensembl"/>
</dbReference>
<dbReference type="GO" id="GO:0045880">
    <property type="term" value="P:positive regulation of smoothened signaling pathway"/>
    <property type="evidence" value="ECO:0000314"/>
    <property type="project" value="UniProtKB"/>
</dbReference>
<dbReference type="GO" id="GO:0051155">
    <property type="term" value="P:positive regulation of striated muscle cell differentiation"/>
    <property type="evidence" value="ECO:0007669"/>
    <property type="project" value="Ensembl"/>
</dbReference>
<dbReference type="GO" id="GO:0033089">
    <property type="term" value="P:positive regulation of T cell differentiation in thymus"/>
    <property type="evidence" value="ECO:0000250"/>
    <property type="project" value="UniProtKB"/>
</dbReference>
<dbReference type="GO" id="GO:0045944">
    <property type="term" value="P:positive regulation of transcription by RNA polymerase II"/>
    <property type="evidence" value="ECO:0000250"/>
    <property type="project" value="BHF-UCL"/>
</dbReference>
<dbReference type="GO" id="GO:2000063">
    <property type="term" value="P:positive regulation of ureter smooth muscle cell differentiation"/>
    <property type="evidence" value="ECO:0000250"/>
    <property type="project" value="UniProtKB"/>
</dbReference>
<dbReference type="GO" id="GO:0030177">
    <property type="term" value="P:positive regulation of Wnt signaling pathway"/>
    <property type="evidence" value="ECO:0007669"/>
    <property type="project" value="Ensembl"/>
</dbReference>
<dbReference type="GO" id="GO:0045059">
    <property type="term" value="P:positive thymic T cell selection"/>
    <property type="evidence" value="ECO:0000250"/>
    <property type="project" value="UniProtKB"/>
</dbReference>
<dbReference type="GO" id="GO:0060516">
    <property type="term" value="P:primary prostatic bud elongation"/>
    <property type="evidence" value="ECO:0007669"/>
    <property type="project" value="Ensembl"/>
</dbReference>
<dbReference type="GO" id="GO:0060523">
    <property type="term" value="P:prostate epithelial cord elongation"/>
    <property type="evidence" value="ECO:0007669"/>
    <property type="project" value="Ensembl"/>
</dbReference>
<dbReference type="GO" id="GO:0030850">
    <property type="term" value="P:prostate gland development"/>
    <property type="evidence" value="ECO:0000250"/>
    <property type="project" value="UniProtKB"/>
</dbReference>
<dbReference type="GO" id="GO:0016540">
    <property type="term" value="P:protein autoprocessing"/>
    <property type="evidence" value="ECO:0007669"/>
    <property type="project" value="InterPro"/>
</dbReference>
<dbReference type="GO" id="GO:0006606">
    <property type="term" value="P:protein import into nucleus"/>
    <property type="evidence" value="ECO:0007669"/>
    <property type="project" value="Ensembl"/>
</dbReference>
<dbReference type="GO" id="GO:0042127">
    <property type="term" value="P:regulation of cell population proliferation"/>
    <property type="evidence" value="ECO:0000250"/>
    <property type="project" value="UniProtKB"/>
</dbReference>
<dbReference type="GO" id="GO:0010468">
    <property type="term" value="P:regulation of gene expression"/>
    <property type="evidence" value="ECO:0000318"/>
    <property type="project" value="GO_Central"/>
</dbReference>
<dbReference type="GO" id="GO:0060251">
    <property type="term" value="P:regulation of glial cell proliferation"/>
    <property type="evidence" value="ECO:0007669"/>
    <property type="project" value="Ensembl"/>
</dbReference>
<dbReference type="GO" id="GO:0060782">
    <property type="term" value="P:regulation of mesenchymal cell proliferation involved in prostate gland development"/>
    <property type="evidence" value="ECO:0007669"/>
    <property type="project" value="Ensembl"/>
</dbReference>
<dbReference type="GO" id="GO:1900107">
    <property type="term" value="P:regulation of nodal signaling pathway"/>
    <property type="evidence" value="ECO:0000303"/>
    <property type="project" value="BHF-UCL"/>
</dbReference>
<dbReference type="GO" id="GO:0042481">
    <property type="term" value="P:regulation of odontogenesis"/>
    <property type="evidence" value="ECO:0000250"/>
    <property type="project" value="BHF-UCL"/>
</dbReference>
<dbReference type="GO" id="GO:0060685">
    <property type="term" value="P:regulation of prostatic bud formation"/>
    <property type="evidence" value="ECO:0007669"/>
    <property type="project" value="Ensembl"/>
</dbReference>
<dbReference type="GO" id="GO:1900180">
    <property type="term" value="P:regulation of protein localization to nucleus"/>
    <property type="evidence" value="ECO:0000314"/>
    <property type="project" value="BHF-UCL"/>
</dbReference>
<dbReference type="GO" id="GO:0030162">
    <property type="term" value="P:regulation of proteolysis"/>
    <property type="evidence" value="ECO:0000250"/>
    <property type="project" value="UniProtKB"/>
</dbReference>
<dbReference type="GO" id="GO:0072091">
    <property type="term" value="P:regulation of stem cell proliferation"/>
    <property type="evidence" value="ECO:0007669"/>
    <property type="project" value="Ensembl"/>
</dbReference>
<dbReference type="GO" id="GO:0060458">
    <property type="term" value="P:right lung development"/>
    <property type="evidence" value="ECO:0007669"/>
    <property type="project" value="Ensembl"/>
</dbReference>
<dbReference type="GO" id="GO:0060021">
    <property type="term" value="P:roof of mouth development"/>
    <property type="evidence" value="ECO:0007669"/>
    <property type="project" value="Ensembl"/>
</dbReference>
<dbReference type="GO" id="GO:0060662">
    <property type="term" value="P:salivary gland cavitation"/>
    <property type="evidence" value="ECO:0007669"/>
    <property type="project" value="Ensembl"/>
</dbReference>
<dbReference type="GO" id="GO:0097264">
    <property type="term" value="P:self proteolysis"/>
    <property type="evidence" value="ECO:0000250"/>
    <property type="project" value="UniProtKB"/>
</dbReference>
<dbReference type="GO" id="GO:0014856">
    <property type="term" value="P:skeletal muscle cell proliferation"/>
    <property type="evidence" value="ECO:0007669"/>
    <property type="project" value="Ensembl"/>
</dbReference>
<dbReference type="GO" id="GO:0098528">
    <property type="term" value="P:skeletal muscle fiber differentiation"/>
    <property type="evidence" value="ECO:0007669"/>
    <property type="project" value="Ensembl"/>
</dbReference>
<dbReference type="GO" id="GO:0048745">
    <property type="term" value="P:smooth muscle tissue development"/>
    <property type="evidence" value="ECO:0000270"/>
    <property type="project" value="UniProtKB"/>
</dbReference>
<dbReference type="GO" id="GO:0007224">
    <property type="term" value="P:smoothened signaling pathway"/>
    <property type="evidence" value="ECO:0000314"/>
    <property type="project" value="FlyBase"/>
</dbReference>
<dbReference type="GO" id="GO:0061053">
    <property type="term" value="P:somite development"/>
    <property type="evidence" value="ECO:0000250"/>
    <property type="project" value="BHF-UCL"/>
</dbReference>
<dbReference type="GO" id="GO:0021513">
    <property type="term" value="P:spinal cord dorsal/ventral patterning"/>
    <property type="evidence" value="ECO:0007669"/>
    <property type="project" value="Ensembl"/>
</dbReference>
<dbReference type="GO" id="GO:0021522">
    <property type="term" value="P:spinal cord motor neuron differentiation"/>
    <property type="evidence" value="ECO:0007669"/>
    <property type="project" value="Ensembl"/>
</dbReference>
<dbReference type="GO" id="GO:0048864">
    <property type="term" value="P:stem cell development"/>
    <property type="evidence" value="ECO:0000250"/>
    <property type="project" value="UniProtKB"/>
</dbReference>
<dbReference type="GO" id="GO:0072089">
    <property type="term" value="P:stem cell proliferation"/>
    <property type="evidence" value="ECO:0007669"/>
    <property type="project" value="Ensembl"/>
</dbReference>
<dbReference type="GO" id="GO:0033077">
    <property type="term" value="P:T cell differentiation in thymus"/>
    <property type="evidence" value="ECO:0000250"/>
    <property type="project" value="BHF-UCL"/>
</dbReference>
<dbReference type="GO" id="GO:0042098">
    <property type="term" value="P:T cell proliferation"/>
    <property type="evidence" value="ECO:0007669"/>
    <property type="project" value="Ensembl"/>
</dbReference>
<dbReference type="GO" id="GO:0021978">
    <property type="term" value="P:telencephalon regionalization"/>
    <property type="evidence" value="ECO:0007669"/>
    <property type="project" value="Ensembl"/>
</dbReference>
<dbReference type="GO" id="GO:0021794">
    <property type="term" value="P:thalamus development"/>
    <property type="evidence" value="ECO:0007669"/>
    <property type="project" value="Ensembl"/>
</dbReference>
<dbReference type="GO" id="GO:0048538">
    <property type="term" value="P:thymus development"/>
    <property type="evidence" value="ECO:0000250"/>
    <property type="project" value="UniProtKB"/>
</dbReference>
<dbReference type="GO" id="GO:0030878">
    <property type="term" value="P:thyroid gland development"/>
    <property type="evidence" value="ECO:0007669"/>
    <property type="project" value="Ensembl"/>
</dbReference>
<dbReference type="GO" id="GO:0060439">
    <property type="term" value="P:trachea morphogenesis"/>
    <property type="evidence" value="ECO:0007669"/>
    <property type="project" value="Ensembl"/>
</dbReference>
<dbReference type="GO" id="GO:1905327">
    <property type="term" value="P:tracheoesophageal septum formation"/>
    <property type="evidence" value="ECO:0007669"/>
    <property type="project" value="Ensembl"/>
</dbReference>
<dbReference type="GO" id="GO:0036484">
    <property type="term" value="P:trunk neural crest cell migration"/>
    <property type="evidence" value="ECO:0007669"/>
    <property type="project" value="Ensembl"/>
</dbReference>
<dbReference type="GO" id="GO:0001570">
    <property type="term" value="P:vasculogenesis"/>
    <property type="evidence" value="ECO:0000250"/>
    <property type="project" value="UniProtKB"/>
</dbReference>
<dbReference type="GO" id="GO:0007418">
    <property type="term" value="P:ventral midline development"/>
    <property type="evidence" value="ECO:0000304"/>
    <property type="project" value="BHF-UCL"/>
</dbReference>
<dbReference type="CDD" id="cd00081">
    <property type="entry name" value="Hint"/>
    <property type="match status" value="1"/>
</dbReference>
<dbReference type="FunFam" id="2.170.16.10:FF:000001">
    <property type="entry name" value="Indian hedgehog"/>
    <property type="match status" value="1"/>
</dbReference>
<dbReference type="FunFam" id="3.30.1380.10:FF:000001">
    <property type="entry name" value="Indian hedgehog"/>
    <property type="match status" value="1"/>
</dbReference>
<dbReference type="Gene3D" id="3.30.1380.10">
    <property type="match status" value="1"/>
</dbReference>
<dbReference type="Gene3D" id="2.170.16.10">
    <property type="entry name" value="Hedgehog/Intein (Hint) domain"/>
    <property type="match status" value="1"/>
</dbReference>
<dbReference type="InterPro" id="IPR001657">
    <property type="entry name" value="Hedgehog"/>
</dbReference>
<dbReference type="InterPro" id="IPR001767">
    <property type="entry name" value="Hedgehog_Hint"/>
</dbReference>
<dbReference type="InterPro" id="IPR009045">
    <property type="entry name" value="Hedgehog_sig/DD-Pept_Zn-bd_sf"/>
</dbReference>
<dbReference type="InterPro" id="IPR050387">
    <property type="entry name" value="Hedgehog_Signaling"/>
</dbReference>
<dbReference type="InterPro" id="IPR000320">
    <property type="entry name" value="Hedgehog_signalling_dom"/>
</dbReference>
<dbReference type="InterPro" id="IPR003586">
    <property type="entry name" value="Hint_dom_C"/>
</dbReference>
<dbReference type="InterPro" id="IPR003587">
    <property type="entry name" value="Hint_dom_N"/>
</dbReference>
<dbReference type="InterPro" id="IPR036844">
    <property type="entry name" value="Hint_dom_sf"/>
</dbReference>
<dbReference type="InterPro" id="IPR006141">
    <property type="entry name" value="Intein_N"/>
</dbReference>
<dbReference type="PANTHER" id="PTHR11889">
    <property type="entry name" value="HEDGEHOG"/>
    <property type="match status" value="1"/>
</dbReference>
<dbReference type="PANTHER" id="PTHR11889:SF36">
    <property type="entry name" value="SONIC HEDGEHOG PROTEIN"/>
    <property type="match status" value="1"/>
</dbReference>
<dbReference type="Pfam" id="PF01085">
    <property type="entry name" value="HH_signal"/>
    <property type="match status" value="1"/>
</dbReference>
<dbReference type="Pfam" id="PF01079">
    <property type="entry name" value="Hint"/>
    <property type="match status" value="1"/>
</dbReference>
<dbReference type="PIRSF" id="PIRSF009400">
    <property type="entry name" value="Peptidase_C46"/>
    <property type="match status" value="1"/>
</dbReference>
<dbReference type="PRINTS" id="PR00632">
    <property type="entry name" value="SONICHHOG"/>
</dbReference>
<dbReference type="SMART" id="SM00305">
    <property type="entry name" value="HintC"/>
    <property type="match status" value="1"/>
</dbReference>
<dbReference type="SMART" id="SM00306">
    <property type="entry name" value="HintN"/>
    <property type="match status" value="1"/>
</dbReference>
<dbReference type="SUPFAM" id="SSF55166">
    <property type="entry name" value="Hedgehog/DD-peptidase"/>
    <property type="match status" value="1"/>
</dbReference>
<dbReference type="SUPFAM" id="SSF51294">
    <property type="entry name" value="Hedgehog/intein (Hint) domain"/>
    <property type="match status" value="1"/>
</dbReference>
<dbReference type="PROSITE" id="PS50817">
    <property type="entry name" value="INTEIN_N_TER"/>
    <property type="match status" value="1"/>
</dbReference>
<protein>
    <recommendedName>
        <fullName evidence="41">Sonic hedgehog protein</fullName>
        <shortName>SHH</shortName>
        <ecNumber evidence="2">3.1.-.-</ecNumber>
    </recommendedName>
    <alternativeName>
        <fullName>HHG-1</fullName>
    </alternativeName>
    <alternativeName>
        <fullName evidence="38">Shh unprocessed N-terminal signaling and C-terminal autoprocessing domains</fullName>
        <shortName evidence="38">ShhNC</shortName>
    </alternativeName>
    <component>
        <recommendedName>
            <fullName>Sonic hedgehog protein N-product</fullName>
            <shortName>ShhN</shortName>
        </recommendedName>
        <alternativeName>
            <fullName evidence="38">Shh N-terminal processed signaling domains</fullName>
            <shortName evidence="38">ShhNp</shortName>
        </alternativeName>
    </component>
</protein>
<name>SHH_HUMAN</name>
<proteinExistence type="evidence at protein level"/>